<name>COQ8A_HUMAN</name>
<dbReference type="EC" id="2.7.-.-" evidence="15"/>
<dbReference type="EMBL" id="AB073905">
    <property type="protein sequence ID" value="BAB91363.1"/>
    <property type="molecule type" value="mRNA"/>
</dbReference>
<dbReference type="EMBL" id="AJ278126">
    <property type="protein sequence ID" value="CAC00482.1"/>
    <property type="molecule type" value="mRNA"/>
</dbReference>
<dbReference type="EMBL" id="AF218003">
    <property type="protein sequence ID" value="AAG17245.1"/>
    <property type="molecule type" value="mRNA"/>
</dbReference>
<dbReference type="EMBL" id="AK074693">
    <property type="protein sequence ID" value="BAC11143.1"/>
    <property type="molecule type" value="mRNA"/>
</dbReference>
<dbReference type="EMBL" id="BX648860">
    <property type="protein sequence ID" value="CAH56132.1"/>
    <property type="molecule type" value="mRNA"/>
</dbReference>
<dbReference type="EMBL" id="AL353689">
    <property type="status" value="NOT_ANNOTATED_CDS"/>
    <property type="molecule type" value="Genomic_DNA"/>
</dbReference>
<dbReference type="EMBL" id="BC005171">
    <property type="protein sequence ID" value="AAH05171.2"/>
    <property type="molecule type" value="mRNA"/>
</dbReference>
<dbReference type="CCDS" id="CCDS1557.1">
    <molecule id="Q8NI60-1"/>
</dbReference>
<dbReference type="RefSeq" id="NP_064632.2">
    <molecule id="Q8NI60-1"/>
    <property type="nucleotide sequence ID" value="NM_020247.4"/>
</dbReference>
<dbReference type="RefSeq" id="XP_005273258.1">
    <molecule id="Q8NI60-1"/>
    <property type="nucleotide sequence ID" value="XM_005273201.2"/>
</dbReference>
<dbReference type="RefSeq" id="XP_011542540.1">
    <molecule id="Q8NI60-1"/>
    <property type="nucleotide sequence ID" value="XM_011544238.2"/>
</dbReference>
<dbReference type="RefSeq" id="XP_011542541.1">
    <molecule id="Q8NI60-1"/>
    <property type="nucleotide sequence ID" value="XM_011544239.3"/>
</dbReference>
<dbReference type="RefSeq" id="XP_011542542.1">
    <property type="nucleotide sequence ID" value="XM_011544240.2"/>
</dbReference>
<dbReference type="RefSeq" id="XP_011542543.1">
    <property type="nucleotide sequence ID" value="XM_011544241.2"/>
</dbReference>
<dbReference type="RefSeq" id="XP_016857341.1">
    <property type="nucleotide sequence ID" value="XM_017001852.1"/>
</dbReference>
<dbReference type="RefSeq" id="XP_024304285.1">
    <molecule id="Q8NI60-1"/>
    <property type="nucleotide sequence ID" value="XM_024448517.2"/>
</dbReference>
<dbReference type="RefSeq" id="XP_024304286.1">
    <molecule id="Q8NI60-1"/>
    <property type="nucleotide sequence ID" value="XM_024448518.2"/>
</dbReference>
<dbReference type="RefSeq" id="XP_047281688.1">
    <molecule id="Q8NI60-1"/>
    <property type="nucleotide sequence ID" value="XM_047425732.1"/>
</dbReference>
<dbReference type="RefSeq" id="XP_047281695.1">
    <molecule id="Q8NI60-1"/>
    <property type="nucleotide sequence ID" value="XM_047425739.1"/>
</dbReference>
<dbReference type="RefSeq" id="XP_047281701.1">
    <molecule id="Q8NI60-1"/>
    <property type="nucleotide sequence ID" value="XM_047425745.1"/>
</dbReference>
<dbReference type="RefSeq" id="XP_047281705.1">
    <molecule id="Q8NI60-1"/>
    <property type="nucleotide sequence ID" value="XM_047425749.1"/>
</dbReference>
<dbReference type="RefSeq" id="XP_054193743.1">
    <molecule id="Q8NI60-1"/>
    <property type="nucleotide sequence ID" value="XM_054337768.1"/>
</dbReference>
<dbReference type="RefSeq" id="XP_054193744.1">
    <molecule id="Q8NI60-1"/>
    <property type="nucleotide sequence ID" value="XM_054337769.1"/>
</dbReference>
<dbReference type="RefSeq" id="XP_054193745.1">
    <molecule id="Q8NI60-1"/>
    <property type="nucleotide sequence ID" value="XM_054337770.1"/>
</dbReference>
<dbReference type="RefSeq" id="XP_054193746.1">
    <molecule id="Q8NI60-1"/>
    <property type="nucleotide sequence ID" value="XM_054337771.1"/>
</dbReference>
<dbReference type="RefSeq" id="XP_054193747.1">
    <molecule id="Q8NI60-1"/>
    <property type="nucleotide sequence ID" value="XM_054337772.1"/>
</dbReference>
<dbReference type="RefSeq" id="XP_054193748.1">
    <molecule id="Q8NI60-1"/>
    <property type="nucleotide sequence ID" value="XM_054337773.1"/>
</dbReference>
<dbReference type="RefSeq" id="XP_054193749.1">
    <molecule id="Q8NI60-1"/>
    <property type="nucleotide sequence ID" value="XM_054337774.1"/>
</dbReference>
<dbReference type="RefSeq" id="XP_054193750.1">
    <molecule id="Q8NI60-1"/>
    <property type="nucleotide sequence ID" value="XM_054337775.1"/>
</dbReference>
<dbReference type="RefSeq" id="XP_054193751.1">
    <molecule id="Q8NI60-1"/>
    <property type="nucleotide sequence ID" value="XM_054337776.1"/>
</dbReference>
<dbReference type="PDB" id="4PED">
    <property type="method" value="X-ray"/>
    <property type="resolution" value="1.64 A"/>
    <property type="chains" value="A=256-647"/>
</dbReference>
<dbReference type="PDB" id="5I35">
    <property type="method" value="X-ray"/>
    <property type="resolution" value="2.30 A"/>
    <property type="chains" value="A=256-647"/>
</dbReference>
<dbReference type="PDB" id="7UDP">
    <property type="method" value="X-ray"/>
    <property type="resolution" value="2.01 A"/>
    <property type="chains" value="A=256-647"/>
</dbReference>
<dbReference type="PDB" id="7UDQ">
    <property type="method" value="X-ray"/>
    <property type="resolution" value="1.90 A"/>
    <property type="chains" value="A/B=256-647"/>
</dbReference>
<dbReference type="PDBsum" id="4PED"/>
<dbReference type="PDBsum" id="5I35"/>
<dbReference type="PDBsum" id="7UDP"/>
<dbReference type="PDBsum" id="7UDQ"/>
<dbReference type="SMR" id="Q8NI60"/>
<dbReference type="BioGRID" id="121312">
    <property type="interactions" value="235"/>
</dbReference>
<dbReference type="FunCoup" id="Q8NI60">
    <property type="interactions" value="1363"/>
</dbReference>
<dbReference type="IntAct" id="Q8NI60">
    <property type="interactions" value="227"/>
</dbReference>
<dbReference type="MINT" id="Q8NI60"/>
<dbReference type="STRING" id="9606.ENSP00000355741"/>
<dbReference type="BindingDB" id="Q8NI60"/>
<dbReference type="ChEMBL" id="CHEMBL5550"/>
<dbReference type="DrugBank" id="DB12010">
    <property type="generic name" value="Fostamatinib"/>
</dbReference>
<dbReference type="DrugCentral" id="Q8NI60"/>
<dbReference type="iPTMnet" id="Q8NI60"/>
<dbReference type="PhosphoSitePlus" id="Q8NI60"/>
<dbReference type="SwissPalm" id="Q8NI60"/>
<dbReference type="BioMuta" id="COQ8A"/>
<dbReference type="DMDM" id="27923741"/>
<dbReference type="CPTAC" id="non-CPTAC-3019"/>
<dbReference type="CPTAC" id="non-CPTAC-3020"/>
<dbReference type="jPOST" id="Q8NI60"/>
<dbReference type="MassIVE" id="Q8NI60"/>
<dbReference type="PaxDb" id="9606-ENSP00000355741"/>
<dbReference type="PeptideAtlas" id="Q8NI60"/>
<dbReference type="ProteomicsDB" id="73833">
    <molecule id="Q8NI60-1"/>
</dbReference>
<dbReference type="ProteomicsDB" id="73834">
    <molecule id="Q8NI60-2"/>
</dbReference>
<dbReference type="ProteomicsDB" id="73835">
    <molecule id="Q8NI60-3"/>
</dbReference>
<dbReference type="ProteomicsDB" id="73836">
    <molecule id="Q8NI60-4"/>
</dbReference>
<dbReference type="Pumba" id="Q8NI60"/>
<dbReference type="Antibodypedia" id="20768">
    <property type="antibodies" value="324 antibodies from 30 providers"/>
</dbReference>
<dbReference type="DNASU" id="56997"/>
<dbReference type="Ensembl" id="ENST00000366777.4">
    <molecule id="Q8NI60-1"/>
    <property type="protein sequence ID" value="ENSP00000355739.3"/>
    <property type="gene ID" value="ENSG00000163050.18"/>
</dbReference>
<dbReference type="Ensembl" id="ENST00000366778.5">
    <molecule id="Q8NI60-3"/>
    <property type="protein sequence ID" value="ENSP00000355740.1"/>
    <property type="gene ID" value="ENSG00000163050.18"/>
</dbReference>
<dbReference type="GeneID" id="56997"/>
<dbReference type="KEGG" id="hsa:56997"/>
<dbReference type="MANE-Select" id="ENST00000366777.4">
    <property type="protein sequence ID" value="ENSP00000355739.3"/>
    <property type="RefSeq nucleotide sequence ID" value="NM_020247.5"/>
    <property type="RefSeq protein sequence ID" value="NP_064632.2"/>
</dbReference>
<dbReference type="UCSC" id="uc001hqm.2">
    <molecule id="Q8NI60-1"/>
    <property type="organism name" value="human"/>
</dbReference>
<dbReference type="AGR" id="HGNC:16812"/>
<dbReference type="CTD" id="56997"/>
<dbReference type="DisGeNET" id="56997"/>
<dbReference type="GeneCards" id="COQ8A"/>
<dbReference type="GeneReviews" id="COQ8A"/>
<dbReference type="HGNC" id="HGNC:16812">
    <property type="gene designation" value="COQ8A"/>
</dbReference>
<dbReference type="HPA" id="ENSG00000163050">
    <property type="expression patterns" value="Group enriched (skeletal muscle, tongue)"/>
</dbReference>
<dbReference type="MalaCards" id="COQ8A"/>
<dbReference type="MIM" id="606980">
    <property type="type" value="gene"/>
</dbReference>
<dbReference type="MIM" id="612016">
    <property type="type" value="phenotype"/>
</dbReference>
<dbReference type="neXtProt" id="NX_Q8NI60"/>
<dbReference type="OpenTargets" id="ENSG00000163050"/>
<dbReference type="Orphanet" id="139485">
    <property type="disease" value="Autosomal recessive ataxia due to ubiquinone deficiency"/>
</dbReference>
<dbReference type="PharmGKB" id="PA25999"/>
<dbReference type="VEuPathDB" id="HostDB:ENSG00000163050"/>
<dbReference type="VEuPathDB" id="HostDB:ENSG00000288674"/>
<dbReference type="eggNOG" id="KOG1234">
    <property type="taxonomic scope" value="Eukaryota"/>
</dbReference>
<dbReference type="GeneTree" id="ENSGT00940000156810"/>
<dbReference type="HOGENOM" id="CLU_006533_9_1_1"/>
<dbReference type="InParanoid" id="Q8NI60"/>
<dbReference type="OMA" id="PEYYVPR"/>
<dbReference type="OrthoDB" id="201153at2759"/>
<dbReference type="PAN-GO" id="Q8NI60">
    <property type="GO annotations" value="3 GO annotations based on evolutionary models"/>
</dbReference>
<dbReference type="PhylomeDB" id="Q8NI60"/>
<dbReference type="TreeFam" id="TF300630"/>
<dbReference type="PathwayCommons" id="Q8NI60"/>
<dbReference type="Reactome" id="R-HSA-2142789">
    <property type="pathway name" value="Ubiquinol biosynthesis"/>
</dbReference>
<dbReference type="SignaLink" id="Q8NI60"/>
<dbReference type="UniPathway" id="UPA00232"/>
<dbReference type="BioGRID-ORCS" id="56997">
    <property type="hits" value="9 hits in 1192 CRISPR screens"/>
</dbReference>
<dbReference type="ChiTaRS" id="COQ8A">
    <property type="organism name" value="human"/>
</dbReference>
<dbReference type="EvolutionaryTrace" id="Q8NI60"/>
<dbReference type="GeneWiki" id="CABC1"/>
<dbReference type="GenomeRNAi" id="56997"/>
<dbReference type="Pharos" id="Q8NI60">
    <property type="development level" value="Tbio"/>
</dbReference>
<dbReference type="PRO" id="PR:Q8NI60"/>
<dbReference type="Proteomes" id="UP000005640">
    <property type="component" value="Chromosome 1"/>
</dbReference>
<dbReference type="RNAct" id="Q8NI60">
    <property type="molecule type" value="protein"/>
</dbReference>
<dbReference type="Bgee" id="ENSG00000163050">
    <property type="expression patterns" value="Expressed in gastrocnemius and 101 other cell types or tissues"/>
</dbReference>
<dbReference type="GO" id="GO:0031314">
    <property type="term" value="C:extrinsic component of mitochondrial inner membrane"/>
    <property type="evidence" value="ECO:0007669"/>
    <property type="project" value="Ensembl"/>
</dbReference>
<dbReference type="GO" id="GO:0005739">
    <property type="term" value="C:mitochondrion"/>
    <property type="evidence" value="ECO:0000314"/>
    <property type="project" value="HPA"/>
</dbReference>
<dbReference type="GO" id="GO:0043531">
    <property type="term" value="F:ADP binding"/>
    <property type="evidence" value="ECO:0000314"/>
    <property type="project" value="UniProtKB"/>
</dbReference>
<dbReference type="GO" id="GO:0005524">
    <property type="term" value="F:ATP binding"/>
    <property type="evidence" value="ECO:0007669"/>
    <property type="project" value="UniProtKB-KW"/>
</dbReference>
<dbReference type="GO" id="GO:0008047">
    <property type="term" value="F:enzyme activator activity"/>
    <property type="evidence" value="ECO:0007669"/>
    <property type="project" value="Ensembl"/>
</dbReference>
<dbReference type="GO" id="GO:0016301">
    <property type="term" value="F:kinase activity"/>
    <property type="evidence" value="ECO:0000314"/>
    <property type="project" value="UniProtKB"/>
</dbReference>
<dbReference type="GO" id="GO:0004672">
    <property type="term" value="F:protein kinase activity"/>
    <property type="evidence" value="ECO:0000250"/>
    <property type="project" value="UniProtKB"/>
</dbReference>
<dbReference type="GO" id="GO:0016310">
    <property type="term" value="P:phosphorylation"/>
    <property type="evidence" value="ECO:0000314"/>
    <property type="project" value="UniProtKB"/>
</dbReference>
<dbReference type="GO" id="GO:0006744">
    <property type="term" value="P:ubiquinone biosynthetic process"/>
    <property type="evidence" value="ECO:0000314"/>
    <property type="project" value="UniProtKB"/>
</dbReference>
<dbReference type="CDD" id="cd13970">
    <property type="entry name" value="ABC1_ADCK3"/>
    <property type="match status" value="1"/>
</dbReference>
<dbReference type="InterPro" id="IPR004147">
    <property type="entry name" value="ABC1_dom"/>
</dbReference>
<dbReference type="InterPro" id="IPR034646">
    <property type="entry name" value="ADCK3_dom"/>
</dbReference>
<dbReference type="InterPro" id="IPR051409">
    <property type="entry name" value="Atypical_kinase_ADCK"/>
</dbReference>
<dbReference type="InterPro" id="IPR011009">
    <property type="entry name" value="Kinase-like_dom_sf"/>
</dbReference>
<dbReference type="PANTHER" id="PTHR43851">
    <property type="match status" value="1"/>
</dbReference>
<dbReference type="PANTHER" id="PTHR43851:SF1">
    <property type="entry name" value="ATYPICAL KINASE COQ8A, MITOCHONDRIAL"/>
    <property type="match status" value="1"/>
</dbReference>
<dbReference type="Pfam" id="PF03109">
    <property type="entry name" value="ABC1"/>
    <property type="match status" value="1"/>
</dbReference>
<dbReference type="SUPFAM" id="SSF56112">
    <property type="entry name" value="Protein kinase-like (PK-like)"/>
    <property type="match status" value="1"/>
</dbReference>
<sequence length="647" mass="71950">MAAILGDTIMVAKGLVKLTQAAVETHLQHLGIGGELIMAARALQSTAVEQIGMFLGKVQGQDKHEEYFAENFGGPEGEFHFSVPHAAGASTDFSSASAPDQSAPPSLGHAHSEGPAPAYVASGPFREAGFPGQASSPLGRANGRLFANPRDSFSAMGFQRRFFHQDQSPVGGLTAEDIEKARQAKARPENKQHKQTLSEHARERKVPVTRIGRLANFGGLAVGLGFGALAEVAKKSLRSEDPSGKKAVLGSSPFLSEANAERIVRTLCKVRGAALKLGQMLSIQDDAFINPHLAKIFERVRQSADFMPLKQMMKTLNNDLGPNWRDKLEYFEERPFAAASIGQVHLARMKGGREVAMKIQYPGVAQSINSDVNNLMAVLNMSNMLPEGLFPEHLIDVLRRELALECDYQREAACARKFRDLLKGHPFFYVPEIVDELCSPHVLTTELVSGFPLDQAEGLSQEIRNEICYNILVLCLRELFEFHFMQTDPNWSNFFYDPQQHKVALLDFGATREYDRSFTDLYIQIIRAAADRDRETVRAKSIEMKFLTGYEVKVMEDAHLDAILILGEAFASDEPFDFGTQSTTEKIHNLIPVMLRHRLVPPPEETYSLHRKMGGSFLICSKLKARFPCKAMFEEAYSNYCKRQAQQ</sequence>
<keyword id="KW-0002">3D-structure</keyword>
<keyword id="KW-0025">Alternative splicing</keyword>
<keyword id="KW-0067">ATP-binding</keyword>
<keyword id="KW-0903">Direct protein sequencing</keyword>
<keyword id="KW-0225">Disease variant</keyword>
<keyword id="KW-0418">Kinase</keyword>
<keyword id="KW-0472">Membrane</keyword>
<keyword id="KW-0496">Mitochondrion</keyword>
<keyword id="KW-0523">Neurodegeneration</keyword>
<keyword id="KW-0547">Nucleotide-binding</keyword>
<keyword id="KW-1274">Primary mitochondrial disease</keyword>
<keyword id="KW-1267">Proteomics identification</keyword>
<keyword id="KW-1185">Reference proteome</keyword>
<keyword id="KW-0808">Transferase</keyword>
<keyword id="KW-0809">Transit peptide</keyword>
<keyword id="KW-0812">Transmembrane</keyword>
<keyword id="KW-1133">Transmembrane helix</keyword>
<keyword id="KW-0831">Ubiquinone biosynthesis</keyword>
<proteinExistence type="evidence at protein level"/>
<evidence type="ECO:0000250" key="1">
    <source>
        <dbReference type="UniProtKB" id="Q96D53"/>
    </source>
</evidence>
<evidence type="ECO:0000255" key="2"/>
<evidence type="ECO:0000256" key="3">
    <source>
        <dbReference type="SAM" id="MobiDB-lite"/>
    </source>
</evidence>
<evidence type="ECO:0000269" key="4">
    <source>
    </source>
</evidence>
<evidence type="ECO:0000269" key="5">
    <source>
    </source>
</evidence>
<evidence type="ECO:0000269" key="6">
    <source>
    </source>
</evidence>
<evidence type="ECO:0000269" key="7">
    <source>
    </source>
</evidence>
<evidence type="ECO:0000269" key="8">
    <source>
    </source>
</evidence>
<evidence type="ECO:0000269" key="9">
    <source>
    </source>
</evidence>
<evidence type="ECO:0000269" key="10">
    <source>
    </source>
</evidence>
<evidence type="ECO:0000269" key="11">
    <source>
    </source>
</evidence>
<evidence type="ECO:0000269" key="12">
    <source>
    </source>
</evidence>
<evidence type="ECO:0000269" key="13">
    <source>
    </source>
</evidence>
<evidence type="ECO:0000269" key="14">
    <source>
    </source>
</evidence>
<evidence type="ECO:0000269" key="15">
    <source>
    </source>
</evidence>
<evidence type="ECO:0000269" key="16">
    <source>
    </source>
</evidence>
<evidence type="ECO:0000269" key="17">
    <source>
    </source>
</evidence>
<evidence type="ECO:0000269" key="18">
    <source>
    </source>
</evidence>
<evidence type="ECO:0000269" key="19">
    <source>
    </source>
</evidence>
<evidence type="ECO:0000269" key="20">
    <source>
    </source>
</evidence>
<evidence type="ECO:0000269" key="21">
    <source>
    </source>
</evidence>
<evidence type="ECO:0000269" key="22">
    <source>
    </source>
</evidence>
<evidence type="ECO:0000269" key="23">
    <source>
    </source>
</evidence>
<evidence type="ECO:0000303" key="24">
    <source>
    </source>
</evidence>
<evidence type="ECO:0000303" key="25">
    <source>
    </source>
</evidence>
<evidence type="ECO:0000303" key="26">
    <source>
    </source>
</evidence>
<evidence type="ECO:0000303" key="27">
    <source>
    </source>
</evidence>
<evidence type="ECO:0000303" key="28">
    <source ref="2"/>
</evidence>
<evidence type="ECO:0000305" key="29"/>
<evidence type="ECO:0000305" key="30">
    <source>
    </source>
</evidence>
<evidence type="ECO:0000305" key="31">
    <source>
    </source>
</evidence>
<evidence type="ECO:0000305" key="32">
    <source>
    </source>
</evidence>
<evidence type="ECO:0000312" key="33">
    <source>
        <dbReference type="HGNC" id="HGNC:16812"/>
    </source>
</evidence>
<evidence type="ECO:0000312" key="34">
    <source>
        <dbReference type="PDB" id="5I35"/>
    </source>
</evidence>
<evidence type="ECO:0007744" key="35">
    <source>
        <dbReference type="PDB" id="7UDP"/>
    </source>
</evidence>
<evidence type="ECO:0007744" key="36">
    <source>
        <dbReference type="PDB" id="7UDQ"/>
    </source>
</evidence>
<evidence type="ECO:0007829" key="37">
    <source>
        <dbReference type="PDB" id="4PED"/>
    </source>
</evidence>
<evidence type="ECO:0007829" key="38">
    <source>
        <dbReference type="PDB" id="5I35"/>
    </source>
</evidence>
<gene>
    <name evidence="27 33" type="primary">COQ8A</name>
    <name evidence="33" type="synonym">ADCK3</name>
    <name evidence="24" type="synonym">CABC1</name>
    <name type="ORF">PP265</name>
</gene>
<comment type="function">
    <text evidence="1 9 15 16 19 22 23">Atypical kinase involved in the biosynthesis of coenzyme Q, also named ubiquinone, an essential lipid-soluble electron transporter for aerobic cellular respiration (PubMed:21296186, PubMed:25498144, PubMed:25540914, PubMed:27499294, PubMed:36302899, PubMed:38425362). Its substrate specificity is still unclear: may act as a protein kinase that mediates phosphorylation of COQ3 (By similarity). According to other reports, acts as a small molecule kinase, possibly a lipid kinase that phosphorylates a prenyl lipid in the ubiquinone biosynthesis pathway, as suggested by its ability to bind coenzyme Q lipid intermediates (PubMed:25498144, PubMed:27499294). However, the small molecule kinase activity was not confirmed by another publication (By similarity). Shows an unusual selectivity for binding ADP over ATP (PubMed:25498144).</text>
</comment>
<comment type="activity regulation">
    <text evidence="15 19 22">Autoinhibited by the N-terminal domain, containing the KxGQ motif, that completely occludes the typical substrate binding pocket (PubMed:25498144, PubMed:27499294). Nucleotide-binding relieves inhibition (PubMed:27499294). Specifically inhibited by 4-anilinoquinoline compound TPP-UNC-CA157 (PubMed:36302899).</text>
</comment>
<comment type="pathway">
    <text evidence="15 22">Cofactor biosynthesis; ubiquinone biosynthesis.</text>
</comment>
<comment type="subunit">
    <text evidence="14 19 20">Homodimer; homodimerizes via its transmembrane region (PubMed:25216398). Interacts with the multi-subunit COQ enzyme complex, composed of at least COQ3, COQ4, COQ5, COQ6, COQ7 and COQ9 (PubMed:27499294, PubMed:27499296).</text>
</comment>
<comment type="interaction">
    <interactant intactId="EBI-745535">
        <id>Q8NI60</id>
    </interactant>
    <interactant intactId="EBI-2813554">
        <id>Q8WTS1</id>
        <label>ABHD5</label>
    </interactant>
    <organismsDiffer>false</organismsDiffer>
    <experiments>3</experiments>
</comment>
<comment type="interaction">
    <interactant intactId="EBI-745535">
        <id>Q8NI60</id>
    </interactant>
    <interactant intactId="EBI-741181">
        <id>Q6RW13</id>
        <label>AGTRAP</label>
    </interactant>
    <organismsDiffer>false</organismsDiffer>
    <experiments>4</experiments>
</comment>
<comment type="interaction">
    <interactant intactId="EBI-745535">
        <id>Q8NI60</id>
    </interactant>
    <interactant intactId="EBI-11522760">
        <id>Q6RW13-2</id>
        <label>AGTRAP</label>
    </interactant>
    <organismsDiffer>false</organismsDiffer>
    <experiments>6</experiments>
</comment>
<comment type="interaction">
    <interactant intactId="EBI-745535">
        <id>Q8NI60</id>
    </interactant>
    <interactant intactId="EBI-22006248">
        <id>Q5T2L2</id>
        <label>AKR1C8</label>
    </interactant>
    <organismsDiffer>false</organismsDiffer>
    <experiments>3</experiments>
</comment>
<comment type="interaction">
    <interactant intactId="EBI-745535">
        <id>Q8NI60</id>
    </interactant>
    <interactant intactId="EBI-8464238">
        <id>Q9NU02</id>
        <label>ANKEF1</label>
    </interactant>
    <organismsDiffer>false</organismsDiffer>
    <experiments>3</experiments>
</comment>
<comment type="interaction">
    <interactant intactId="EBI-745535">
        <id>Q8NI60</id>
    </interactant>
    <interactant intactId="EBI-1048913">
        <id>Q9H0Y0</id>
        <label>ATG10</label>
    </interactant>
    <organismsDiffer>false</organismsDiffer>
    <experiments>3</experiments>
</comment>
<comment type="interaction">
    <interactant intactId="EBI-745535">
        <id>Q8NI60</id>
    </interactant>
    <interactant intactId="EBI-18036948">
        <id>Q3SXR2</id>
        <label>C3orf36</label>
    </interactant>
    <organismsDiffer>false</organismsDiffer>
    <experiments>3</experiments>
</comment>
<comment type="interaction">
    <interactant intactId="EBI-745535">
        <id>Q8NI60</id>
    </interactant>
    <interactant intactId="EBI-17641690">
        <id>Q96HJ3-2</id>
        <label>CCDC34</label>
    </interactant>
    <organismsDiffer>false</organismsDiffer>
    <experiments>3</experiments>
</comment>
<comment type="interaction">
    <interactant intactId="EBI-745535">
        <id>Q8NI60</id>
    </interactant>
    <interactant intactId="EBI-4401010">
        <id>P09496-2</id>
        <label>CLTA</label>
    </interactant>
    <organismsDiffer>false</organismsDiffer>
    <experiments>3</experiments>
</comment>
<comment type="interaction">
    <interactant intactId="EBI-745535">
        <id>Q8NI60</id>
    </interactant>
    <interactant intactId="EBI-17278014">
        <id>Q8IZR5-2</id>
        <label>CMTM4</label>
    </interactant>
    <organismsDiffer>false</organismsDiffer>
    <experiments>3</experiments>
</comment>
<comment type="interaction">
    <interactant intactId="EBI-745535">
        <id>Q8NI60</id>
    </interactant>
    <interactant intactId="EBI-11522780">
        <id>Q96DZ9-2</id>
        <label>CMTM5</label>
    </interactant>
    <organismsDiffer>false</organismsDiffer>
    <experiments>6</experiments>
</comment>
<comment type="interaction">
    <interactant intactId="EBI-745535">
        <id>Q8NI60</id>
    </interactant>
    <interactant intactId="EBI-1054315">
        <id>Q9NX76</id>
        <label>CMTM6</label>
    </interactant>
    <organismsDiffer>false</organismsDiffer>
    <experiments>3</experiments>
</comment>
<comment type="interaction">
    <interactant intactId="EBI-745535">
        <id>Q8NI60</id>
    </interactant>
    <interactant intactId="EBI-12375799">
        <id>P02458-1</id>
        <label>COL2A1</label>
    </interactant>
    <organismsDiffer>false</organismsDiffer>
    <experiments>3</experiments>
</comment>
<comment type="interaction">
    <interactant intactId="EBI-745535">
        <id>Q8NI60</id>
    </interactant>
    <interactant intactId="EBI-724524">
        <id>O75208</id>
        <label>COQ9</label>
    </interactant>
    <organismsDiffer>false</organismsDiffer>
    <experiments>11</experiments>
</comment>
<comment type="interaction">
    <interactant intactId="EBI-745535">
        <id>Q8NI60</id>
    </interactant>
    <interactant intactId="EBI-12878374">
        <id>Q9BSY9</id>
        <label>DESI2</label>
    </interactant>
    <organismsDiffer>false</organismsDiffer>
    <experiments>3</experiments>
</comment>
<comment type="interaction">
    <interactant intactId="EBI-745535">
        <id>Q8NI60</id>
    </interactant>
    <interactant intactId="EBI-724653">
        <id>Q9BPU6</id>
        <label>DPYSL5</label>
    </interactant>
    <organismsDiffer>false</organismsDiffer>
    <experiments>3</experiments>
</comment>
<comment type="interaction">
    <interactant intactId="EBI-745535">
        <id>Q8NI60</id>
    </interactant>
    <interactant intactId="EBI-740376">
        <id>Q86UW9</id>
        <label>DTX2</label>
    </interactant>
    <organismsDiffer>false</organismsDiffer>
    <experiments>3</experiments>
</comment>
<comment type="interaction">
    <interactant intactId="EBI-745535">
        <id>Q8NI60</id>
    </interactant>
    <interactant intactId="EBI-10290462">
        <id>Q96KS9</id>
        <label>FAM167A</label>
    </interactant>
    <organismsDiffer>false</organismsDiffer>
    <experiments>3</experiments>
</comment>
<comment type="interaction">
    <interactant intactId="EBI-745535">
        <id>Q8NI60</id>
    </interactant>
    <interactant intactId="EBI-7962481">
        <id>Q6ZNL6</id>
        <label>FGD5</label>
    </interactant>
    <organismsDiffer>false</organismsDiffer>
    <experiments>3</experiments>
</comment>
<comment type="interaction">
    <interactant intactId="EBI-745535">
        <id>Q8NI60</id>
    </interactant>
    <interactant intactId="EBI-12205593">
        <id>Q8TAC2</id>
        <label>JOSD2</label>
    </interactant>
    <organismsDiffer>false</organismsDiffer>
    <experiments>3</experiments>
</comment>
<comment type="interaction">
    <interactant intactId="EBI-745535">
        <id>Q8NI60</id>
    </interactant>
    <interactant intactId="EBI-21591415">
        <id>P13473-2</id>
        <label>LAMP2</label>
    </interactant>
    <organismsDiffer>false</organismsDiffer>
    <experiments>3</experiments>
</comment>
<comment type="interaction">
    <interactant intactId="EBI-745535">
        <id>Q8NI60</id>
    </interactant>
    <interactant intactId="EBI-7055862">
        <id>Q96B96</id>
        <label>LDAF1</label>
    </interactant>
    <organismsDiffer>false</organismsDiffer>
    <experiments>8</experiments>
</comment>
<comment type="interaction">
    <interactant intactId="EBI-745535">
        <id>Q8NI60</id>
    </interactant>
    <interactant intactId="EBI-25835523">
        <id>Q9H2C1</id>
        <label>LHX5</label>
    </interactant>
    <organismsDiffer>false</organismsDiffer>
    <experiments>3</experiments>
</comment>
<comment type="interaction">
    <interactant intactId="EBI-745535">
        <id>Q8NI60</id>
    </interactant>
    <interactant intactId="EBI-725647">
        <id>Q99732</id>
        <label>LITAF</label>
    </interactant>
    <organismsDiffer>false</organismsDiffer>
    <experiments>3</experiments>
</comment>
<comment type="interaction">
    <interactant intactId="EBI-745535">
        <id>Q8NI60</id>
    </interactant>
    <interactant intactId="EBI-21916939">
        <id>P0DP58-2</id>
        <label>LYNX1</label>
    </interactant>
    <organismsDiffer>false</organismsDiffer>
    <experiments>3</experiments>
</comment>
<comment type="interaction">
    <interactant intactId="EBI-745535">
        <id>Q8NI60</id>
    </interactant>
    <interactant intactId="EBI-741835">
        <id>Q96M61</id>
        <label>MAGEB18</label>
    </interactant>
    <organismsDiffer>false</organismsDiffer>
    <experiments>3</experiments>
</comment>
<comment type="interaction">
    <interactant intactId="EBI-745535">
        <id>Q8NI60</id>
    </interactant>
    <interactant intactId="EBI-944295">
        <id>Q969L2</id>
        <label>MAL2</label>
    </interactant>
    <organismsDiffer>false</organismsDiffer>
    <experiments>5</experiments>
</comment>
<comment type="interaction">
    <interactant intactId="EBI-745535">
        <id>Q8NI60</id>
    </interactant>
    <interactant intactId="EBI-3911344">
        <id>P27338</id>
        <label>MAOB</label>
    </interactant>
    <organismsDiffer>false</organismsDiffer>
    <experiments>3</experiments>
</comment>
<comment type="interaction">
    <interactant intactId="EBI-745535">
        <id>Q8NI60</id>
    </interactant>
    <interactant intactId="EBI-5454865">
        <id>Q6IN84</id>
        <label>MRM1</label>
    </interactant>
    <organismsDiffer>false</organismsDiffer>
    <experiments>3</experiments>
</comment>
<comment type="interaction">
    <interactant intactId="EBI-745535">
        <id>Q8NI60</id>
    </interactant>
    <interactant intactId="EBI-3923617">
        <id>Q9H2K0</id>
        <label>MTIF3</label>
    </interactant>
    <organismsDiffer>false</organismsDiffer>
    <experiments>3</experiments>
</comment>
<comment type="interaction">
    <interactant intactId="EBI-745535">
        <id>Q8NI60</id>
    </interactant>
    <interactant intactId="EBI-10986258">
        <id>Q69YL0</id>
        <label>NCBP2AS2</label>
    </interactant>
    <organismsDiffer>false</organismsDiffer>
    <experiments>3</experiments>
</comment>
<comment type="interaction">
    <interactant intactId="EBI-745535">
        <id>Q8NI60</id>
    </interactant>
    <interactant intactId="EBI-22006224">
        <id>Q6N063-2</id>
        <label>OGFOD2</label>
    </interactant>
    <organismsDiffer>false</organismsDiffer>
    <experiments>3</experiments>
</comment>
<comment type="interaction">
    <interactant intactId="EBI-745535">
        <id>Q8NI60</id>
    </interactant>
    <interactant intactId="EBI-721750">
        <id>Q8N138</id>
        <label>ORMDL3</label>
    </interactant>
    <organismsDiffer>false</organismsDiffer>
    <experiments>3</experiments>
</comment>
<comment type="interaction">
    <interactant intactId="EBI-745535">
        <id>Q8NI60</id>
    </interactant>
    <interactant intactId="EBI-741171">
        <id>Q96AL5</id>
        <label>PBX3</label>
    </interactant>
    <organismsDiffer>false</organismsDiffer>
    <experiments>3</experiments>
</comment>
<comment type="interaction">
    <interactant intactId="EBI-745535">
        <id>Q8NI60</id>
    </interactant>
    <interactant intactId="EBI-21503705">
        <id>Q58EX7-2</id>
        <label>PLEKHG4</label>
    </interactant>
    <organismsDiffer>false</organismsDiffer>
    <experiments>3</experiments>
</comment>
<comment type="interaction">
    <interactant intactId="EBI-745535">
        <id>Q8NI60</id>
    </interactant>
    <interactant intactId="EBI-712367">
        <id>Q9UI14</id>
        <label>RABAC1</label>
    </interactant>
    <organismsDiffer>false</organismsDiffer>
    <experiments>12</experiments>
</comment>
<comment type="interaction">
    <interactant intactId="EBI-745535">
        <id>Q8NI60</id>
    </interactant>
    <interactant intactId="EBI-750345">
        <id>Q96HR9</id>
        <label>REEP6</label>
    </interactant>
    <organismsDiffer>false</organismsDiffer>
    <experiments>9</experiments>
</comment>
<comment type="interaction">
    <interactant intactId="EBI-745535">
        <id>Q8NI60</id>
    </interactant>
    <interactant intactId="EBI-14065960">
        <id>Q96HR9-2</id>
        <label>REEP6</label>
    </interactant>
    <organismsDiffer>false</organismsDiffer>
    <experiments>3</experiments>
</comment>
<comment type="interaction">
    <interactant intactId="EBI-745535">
        <id>Q8NI60</id>
    </interactant>
    <interactant intactId="EBI-25834767">
        <id>P47804-3</id>
        <label>RGR</label>
    </interactant>
    <organismsDiffer>false</organismsDiffer>
    <experiments>3</experiments>
</comment>
<comment type="interaction">
    <interactant intactId="EBI-745535">
        <id>Q8NI60</id>
    </interactant>
    <interactant intactId="EBI-714023">
        <id>Q8N5U6</id>
        <label>RNF10</label>
    </interactant>
    <organismsDiffer>false</organismsDiffer>
    <experiments>3</experiments>
</comment>
<comment type="interaction">
    <interactant intactId="EBI-745535">
        <id>Q8NI60</id>
    </interactant>
    <interactant intactId="EBI-1052363">
        <id>Q9NS64</id>
        <label>RPRM</label>
    </interactant>
    <organismsDiffer>false</organismsDiffer>
    <experiments>3</experiments>
</comment>
<comment type="interaction">
    <interactant intactId="EBI-745535">
        <id>Q8NI60</id>
    </interactant>
    <interactant intactId="EBI-9089805">
        <id>Q9NTN9-3</id>
        <label>SEMA4G</label>
    </interactant>
    <organismsDiffer>false</organismsDiffer>
    <experiments>3</experiments>
</comment>
<comment type="interaction">
    <interactant intactId="EBI-745535">
        <id>Q8NI60</id>
    </interactant>
    <interactant intactId="EBI-2623095">
        <id>Q9Y371</id>
        <label>SH3GLB1</label>
    </interactant>
    <organismsDiffer>false</organismsDiffer>
    <experiments>11</experiments>
</comment>
<comment type="interaction">
    <interactant intactId="EBI-745535">
        <id>Q8NI60</id>
    </interactant>
    <interactant intactId="EBI-9092164">
        <id>O60902-3</id>
        <label>SHOX2</label>
    </interactant>
    <organismsDiffer>false</organismsDiffer>
    <experiments>3</experiments>
</comment>
<comment type="interaction">
    <interactant intactId="EBI-745535">
        <id>Q8NI60</id>
    </interactant>
    <interactant intactId="EBI-12828299">
        <id>O60906</id>
        <label>SMPD2</label>
    </interactant>
    <organismsDiffer>false</organismsDiffer>
    <experiments>3</experiments>
</comment>
<comment type="interaction">
    <interactant intactId="EBI-745535">
        <id>Q8NI60</id>
    </interactant>
    <interactant intactId="EBI-354861">
        <id>Q9C004</id>
        <label>SPRY4</label>
    </interactant>
    <organismsDiffer>false</organismsDiffer>
    <experiments>3</experiments>
</comment>
<comment type="interaction">
    <interactant intactId="EBI-745535">
        <id>Q8NI60</id>
    </interactant>
    <interactant intactId="EBI-12094584">
        <id>O60499-2</id>
        <label>STX10</label>
    </interactant>
    <organismsDiffer>false</organismsDiffer>
    <experiments>3</experiments>
</comment>
<comment type="interaction">
    <interactant intactId="EBI-745535">
        <id>Q8NI60</id>
    </interactant>
    <interactant intactId="EBI-1105213">
        <id>Q9UBB9</id>
        <label>TFIP11</label>
    </interactant>
    <organismsDiffer>false</organismsDiffer>
    <experiments>13</experiments>
</comment>
<comment type="interaction">
    <interactant intactId="EBI-745535">
        <id>Q8NI60</id>
    </interactant>
    <interactant intactId="EBI-12807858">
        <id>Q7Z6W1</id>
        <label>TMCO2</label>
    </interactant>
    <organismsDiffer>false</organismsDiffer>
    <experiments>3</experiments>
</comment>
<comment type="interaction">
    <interactant intactId="EBI-745535">
        <id>Q8NI60</id>
    </interactant>
    <interactant intactId="EBI-9675724">
        <id>Q8WW34</id>
        <label>TMEM239</label>
    </interactant>
    <organismsDiffer>false</organismsDiffer>
    <experiments>5</experiments>
</comment>
<comment type="interaction">
    <interactant intactId="EBI-745535">
        <id>Q8NI60</id>
    </interactant>
    <interactant intactId="EBI-11528917">
        <id>Q8WW34-2</id>
        <label>TMEM239</label>
    </interactant>
    <organismsDiffer>false</organismsDiffer>
    <experiments>3</experiments>
</comment>
<comment type="interaction">
    <interactant intactId="EBI-745535">
        <id>Q8NI60</id>
    </interactant>
    <interactant intactId="EBI-782604">
        <id>O43399</id>
        <label>TPD52L2</label>
    </interactant>
    <organismsDiffer>false</organismsDiffer>
    <experiments>3</experiments>
</comment>
<comment type="subcellular location">
    <subcellularLocation>
        <location evidence="4 15 21">Mitochondrion membrane</location>
        <topology evidence="2 30">Single-pass membrane protein</topology>
    </subcellularLocation>
</comment>
<comment type="alternative products">
    <event type="alternative splicing"/>
    <isoform>
        <id>Q8NI60-1</id>
        <name>1</name>
        <sequence type="displayed"/>
    </isoform>
    <isoform>
        <id>Q8NI60-2</id>
        <name>2</name>
        <sequence type="described" ref="VSP_022351"/>
    </isoform>
    <isoform>
        <id>Q8NI60-3</id>
        <name>3</name>
        <sequence type="described" ref="VSP_022353"/>
    </isoform>
    <isoform>
        <id>Q8NI60-4</id>
        <name>4</name>
        <sequence type="described" ref="VSP_022352"/>
    </isoform>
</comment>
<comment type="tissue specificity">
    <text evidence="13">Widely expressed, with highest levels in adrenal gland, heart, pancreas, nasal mucosa, stomach, uterus and skeletal muscle.</text>
</comment>
<comment type="induction">
    <text evidence="4">By p53/TP53.</text>
</comment>
<comment type="domain">
    <text evidence="15 19">Adopts an atypical protein kinase-like fold: while it adopts a core fold similar to that of well-characterized protein kinase-like domains, a number of features are positioned to inhibit the kinase activity: (1) an atypical AAAS motif in an alanine-rich (A-rich) loop that replaces the canonical glycine-rich (G-rich) nucleotide-binding loop and limits ATP binding by establishing an unusual selectivity for ADP and (2) an N-terminal domain, containing the KxGQ motif, that completely occludes the typical substrate binding pocket (PubMed:25498144). Nucleotide-binding opens the substrate binding pocket and flips the active site from inside the hydrophobic core into a catalytically competent, solvent-exposed posture (PubMed:27499294).</text>
</comment>
<comment type="disease" evidence="6 7 8 10 11 12 15 17 18">
    <disease id="DI-01063">
        <name>Coenzyme Q10 deficiency, primary, 4</name>
        <acronym>COQ10D4</acronym>
        <description>An autosomal recessive disorder characterized by childhood-onset of cerebellar ataxia and exercise intolerance. Patient manifest gait ataxia and cerebellar atrophy with slow progression. Additional features include brisk tendon reflexes and Hoffmann sign, variable psychomotor retardation and variable seizures.</description>
        <dbReference type="MIM" id="612016"/>
    </disease>
    <text>The disease is caused by variants affecting the gene represented in this entry.</text>
</comment>
<comment type="similarity">
    <text evidence="29">Belongs to the protein kinase superfamily. ADCK protein kinase family.</text>
</comment>
<reference key="1">
    <citation type="journal article" date="2002" name="Cancer Res.">
        <title>Isolation of a novel gene, CABC1, encoding a mitochondrial protein that is highly homologous to yeast activity of bc1 complex.</title>
        <authorList>
            <person name="Iiizumi M."/>
            <person name="Arakawa H."/>
            <person name="Mori T."/>
            <person name="Ando A."/>
            <person name="Nakamura Y."/>
        </authorList>
    </citation>
    <scope>NUCLEOTIDE SEQUENCE [MRNA] (ISOFORM 1)</scope>
    <scope>SUBCELLULAR LOCATION</scope>
    <scope>INDUCTION</scope>
</reference>
<reference key="2">
    <citation type="submission" date="2000-05" db="EMBL/GenBank/DDBJ databases">
        <title>Full length sequencing of some human and murine muscular transcript (Telethon Italy project B41).</title>
        <authorList>
            <person name="Ievolella C."/>
            <person name="Stanchi F."/>
            <person name="Bertocco E."/>
            <person name="Millino C."/>
            <person name="Faulkner G."/>
            <person name="Valle G."/>
            <person name="Lanfranchi G."/>
        </authorList>
    </citation>
    <scope>NUCLEOTIDE SEQUENCE [LARGE SCALE MRNA] (ISOFORM 4)</scope>
    <source>
        <tissue>Skeletal muscle</tissue>
    </source>
</reference>
<reference key="3">
    <citation type="journal article" date="2004" name="Proc. Natl. Acad. Sci. U.S.A.">
        <title>Large-scale cDNA transfection screening for genes related to cancer development and progression.</title>
        <authorList>
            <person name="Wan D."/>
            <person name="Gong Y."/>
            <person name="Qin W."/>
            <person name="Zhang P."/>
            <person name="Li J."/>
            <person name="Wei L."/>
            <person name="Zhou X."/>
            <person name="Li H."/>
            <person name="Qiu X."/>
            <person name="Zhong F."/>
            <person name="He L."/>
            <person name="Yu J."/>
            <person name="Yao G."/>
            <person name="Jiang H."/>
            <person name="Qian L."/>
            <person name="Yu Y."/>
            <person name="Shu H."/>
            <person name="Chen X."/>
            <person name="Xu H."/>
            <person name="Guo M."/>
            <person name="Pan Z."/>
            <person name="Chen Y."/>
            <person name="Ge C."/>
            <person name="Yang S."/>
            <person name="Gu J."/>
        </authorList>
    </citation>
    <scope>NUCLEOTIDE SEQUENCE [LARGE SCALE MRNA] (ISOFORM 2)</scope>
</reference>
<reference key="4">
    <citation type="journal article" date="2004" name="Nat. Genet.">
        <title>Complete sequencing and characterization of 21,243 full-length human cDNAs.</title>
        <authorList>
            <person name="Ota T."/>
            <person name="Suzuki Y."/>
            <person name="Nishikawa T."/>
            <person name="Otsuki T."/>
            <person name="Sugiyama T."/>
            <person name="Irie R."/>
            <person name="Wakamatsu A."/>
            <person name="Hayashi K."/>
            <person name="Sato H."/>
            <person name="Nagai K."/>
            <person name="Kimura K."/>
            <person name="Makita H."/>
            <person name="Sekine M."/>
            <person name="Obayashi M."/>
            <person name="Nishi T."/>
            <person name="Shibahara T."/>
            <person name="Tanaka T."/>
            <person name="Ishii S."/>
            <person name="Yamamoto J."/>
            <person name="Saito K."/>
            <person name="Kawai Y."/>
            <person name="Isono Y."/>
            <person name="Nakamura Y."/>
            <person name="Nagahari K."/>
            <person name="Murakami K."/>
            <person name="Yasuda T."/>
            <person name="Iwayanagi T."/>
            <person name="Wagatsuma M."/>
            <person name="Shiratori A."/>
            <person name="Sudo H."/>
            <person name="Hosoiri T."/>
            <person name="Kaku Y."/>
            <person name="Kodaira H."/>
            <person name="Kondo H."/>
            <person name="Sugawara M."/>
            <person name="Takahashi M."/>
            <person name="Kanda K."/>
            <person name="Yokoi T."/>
            <person name="Furuya T."/>
            <person name="Kikkawa E."/>
            <person name="Omura Y."/>
            <person name="Abe K."/>
            <person name="Kamihara K."/>
            <person name="Katsuta N."/>
            <person name="Sato K."/>
            <person name="Tanikawa M."/>
            <person name="Yamazaki M."/>
            <person name="Ninomiya K."/>
            <person name="Ishibashi T."/>
            <person name="Yamashita H."/>
            <person name="Murakawa K."/>
            <person name="Fujimori K."/>
            <person name="Tanai H."/>
            <person name="Kimata M."/>
            <person name="Watanabe M."/>
            <person name="Hiraoka S."/>
            <person name="Chiba Y."/>
            <person name="Ishida S."/>
            <person name="Ono Y."/>
            <person name="Takiguchi S."/>
            <person name="Watanabe S."/>
            <person name="Yosida M."/>
            <person name="Hotuta T."/>
            <person name="Kusano J."/>
            <person name="Kanehori K."/>
            <person name="Takahashi-Fujii A."/>
            <person name="Hara H."/>
            <person name="Tanase T.-O."/>
            <person name="Nomura Y."/>
            <person name="Togiya S."/>
            <person name="Komai F."/>
            <person name="Hara R."/>
            <person name="Takeuchi K."/>
            <person name="Arita M."/>
            <person name="Imose N."/>
            <person name="Musashino K."/>
            <person name="Yuuki H."/>
            <person name="Oshima A."/>
            <person name="Sasaki N."/>
            <person name="Aotsuka S."/>
            <person name="Yoshikawa Y."/>
            <person name="Matsunawa H."/>
            <person name="Ichihara T."/>
            <person name="Shiohata N."/>
            <person name="Sano S."/>
            <person name="Moriya S."/>
            <person name="Momiyama H."/>
            <person name="Satoh N."/>
            <person name="Takami S."/>
            <person name="Terashima Y."/>
            <person name="Suzuki O."/>
            <person name="Nakagawa S."/>
            <person name="Senoh A."/>
            <person name="Mizoguchi H."/>
            <person name="Goto Y."/>
            <person name="Shimizu F."/>
            <person name="Wakebe H."/>
            <person name="Hishigaki H."/>
            <person name="Watanabe T."/>
            <person name="Sugiyama A."/>
            <person name="Takemoto M."/>
            <person name="Kawakami B."/>
            <person name="Yamazaki M."/>
            <person name="Watanabe K."/>
            <person name="Kumagai A."/>
            <person name="Itakura S."/>
            <person name="Fukuzumi Y."/>
            <person name="Fujimori Y."/>
            <person name="Komiyama M."/>
            <person name="Tashiro H."/>
            <person name="Tanigami A."/>
            <person name="Fujiwara T."/>
            <person name="Ono T."/>
            <person name="Yamada K."/>
            <person name="Fujii Y."/>
            <person name="Ozaki K."/>
            <person name="Hirao M."/>
            <person name="Ohmori Y."/>
            <person name="Kawabata A."/>
            <person name="Hikiji T."/>
            <person name="Kobatake N."/>
            <person name="Inagaki H."/>
            <person name="Ikema Y."/>
            <person name="Okamoto S."/>
            <person name="Okitani R."/>
            <person name="Kawakami T."/>
            <person name="Noguchi S."/>
            <person name="Itoh T."/>
            <person name="Shigeta K."/>
            <person name="Senba T."/>
            <person name="Matsumura K."/>
            <person name="Nakajima Y."/>
            <person name="Mizuno T."/>
            <person name="Morinaga M."/>
            <person name="Sasaki M."/>
            <person name="Togashi T."/>
            <person name="Oyama M."/>
            <person name="Hata H."/>
            <person name="Watanabe M."/>
            <person name="Komatsu T."/>
            <person name="Mizushima-Sugano J."/>
            <person name="Satoh T."/>
            <person name="Shirai Y."/>
            <person name="Takahashi Y."/>
            <person name="Nakagawa K."/>
            <person name="Okumura K."/>
            <person name="Nagase T."/>
            <person name="Nomura N."/>
            <person name="Kikuchi H."/>
            <person name="Masuho Y."/>
            <person name="Yamashita R."/>
            <person name="Nakai K."/>
            <person name="Yada T."/>
            <person name="Nakamura Y."/>
            <person name="Ohara O."/>
            <person name="Isogai T."/>
            <person name="Sugano S."/>
        </authorList>
    </citation>
    <scope>NUCLEOTIDE SEQUENCE [LARGE SCALE MRNA] (ISOFORM 1)</scope>
    <source>
        <tissue>Mammary gland</tissue>
    </source>
</reference>
<reference key="5">
    <citation type="journal article" date="2007" name="BMC Genomics">
        <title>The full-ORF clone resource of the German cDNA consortium.</title>
        <authorList>
            <person name="Bechtel S."/>
            <person name="Rosenfelder H."/>
            <person name="Duda A."/>
            <person name="Schmidt C.P."/>
            <person name="Ernst U."/>
            <person name="Wellenreuther R."/>
            <person name="Mehrle A."/>
            <person name="Schuster C."/>
            <person name="Bahr A."/>
            <person name="Bloecker H."/>
            <person name="Heubner D."/>
            <person name="Hoerlein A."/>
            <person name="Michel G."/>
            <person name="Wedler H."/>
            <person name="Koehrer K."/>
            <person name="Ottenwaelder B."/>
            <person name="Poustka A."/>
            <person name="Wiemann S."/>
            <person name="Schupp I."/>
        </authorList>
    </citation>
    <scope>NUCLEOTIDE SEQUENCE [LARGE SCALE MRNA] (ISOFORM 3)</scope>
    <source>
        <tissue>Small intestine</tissue>
    </source>
</reference>
<reference key="6">
    <citation type="journal article" date="2006" name="Nature">
        <title>The DNA sequence and biological annotation of human chromosome 1.</title>
        <authorList>
            <person name="Gregory S.G."/>
            <person name="Barlow K.F."/>
            <person name="McLay K.E."/>
            <person name="Kaul R."/>
            <person name="Swarbreck D."/>
            <person name="Dunham A."/>
            <person name="Scott C.E."/>
            <person name="Howe K.L."/>
            <person name="Woodfine K."/>
            <person name="Spencer C.C.A."/>
            <person name="Jones M.C."/>
            <person name="Gillson C."/>
            <person name="Searle S."/>
            <person name="Zhou Y."/>
            <person name="Kokocinski F."/>
            <person name="McDonald L."/>
            <person name="Evans R."/>
            <person name="Phillips K."/>
            <person name="Atkinson A."/>
            <person name="Cooper R."/>
            <person name="Jones C."/>
            <person name="Hall R.E."/>
            <person name="Andrews T.D."/>
            <person name="Lloyd C."/>
            <person name="Ainscough R."/>
            <person name="Almeida J.P."/>
            <person name="Ambrose K.D."/>
            <person name="Anderson F."/>
            <person name="Andrew R.W."/>
            <person name="Ashwell R.I.S."/>
            <person name="Aubin K."/>
            <person name="Babbage A.K."/>
            <person name="Bagguley C.L."/>
            <person name="Bailey J."/>
            <person name="Beasley H."/>
            <person name="Bethel G."/>
            <person name="Bird C.P."/>
            <person name="Bray-Allen S."/>
            <person name="Brown J.Y."/>
            <person name="Brown A.J."/>
            <person name="Buckley D."/>
            <person name="Burton J."/>
            <person name="Bye J."/>
            <person name="Carder C."/>
            <person name="Chapman J.C."/>
            <person name="Clark S.Y."/>
            <person name="Clarke G."/>
            <person name="Clee C."/>
            <person name="Cobley V."/>
            <person name="Collier R.E."/>
            <person name="Corby N."/>
            <person name="Coville G.J."/>
            <person name="Davies J."/>
            <person name="Deadman R."/>
            <person name="Dunn M."/>
            <person name="Earthrowl M."/>
            <person name="Ellington A.G."/>
            <person name="Errington H."/>
            <person name="Frankish A."/>
            <person name="Frankland J."/>
            <person name="French L."/>
            <person name="Garner P."/>
            <person name="Garnett J."/>
            <person name="Gay L."/>
            <person name="Ghori M.R.J."/>
            <person name="Gibson R."/>
            <person name="Gilby L.M."/>
            <person name="Gillett W."/>
            <person name="Glithero R.J."/>
            <person name="Grafham D.V."/>
            <person name="Griffiths C."/>
            <person name="Griffiths-Jones S."/>
            <person name="Grocock R."/>
            <person name="Hammond S."/>
            <person name="Harrison E.S.I."/>
            <person name="Hart E."/>
            <person name="Haugen E."/>
            <person name="Heath P.D."/>
            <person name="Holmes S."/>
            <person name="Holt K."/>
            <person name="Howden P.J."/>
            <person name="Hunt A.R."/>
            <person name="Hunt S.E."/>
            <person name="Hunter G."/>
            <person name="Isherwood J."/>
            <person name="James R."/>
            <person name="Johnson C."/>
            <person name="Johnson D."/>
            <person name="Joy A."/>
            <person name="Kay M."/>
            <person name="Kershaw J.K."/>
            <person name="Kibukawa M."/>
            <person name="Kimberley A.M."/>
            <person name="King A."/>
            <person name="Knights A.J."/>
            <person name="Lad H."/>
            <person name="Laird G."/>
            <person name="Lawlor S."/>
            <person name="Leongamornlert D.A."/>
            <person name="Lloyd D.M."/>
            <person name="Loveland J."/>
            <person name="Lovell J."/>
            <person name="Lush M.J."/>
            <person name="Lyne R."/>
            <person name="Martin S."/>
            <person name="Mashreghi-Mohammadi M."/>
            <person name="Matthews L."/>
            <person name="Matthews N.S.W."/>
            <person name="McLaren S."/>
            <person name="Milne S."/>
            <person name="Mistry S."/>
            <person name="Moore M.J.F."/>
            <person name="Nickerson T."/>
            <person name="O'Dell C.N."/>
            <person name="Oliver K."/>
            <person name="Palmeiri A."/>
            <person name="Palmer S.A."/>
            <person name="Parker A."/>
            <person name="Patel D."/>
            <person name="Pearce A.V."/>
            <person name="Peck A.I."/>
            <person name="Pelan S."/>
            <person name="Phelps K."/>
            <person name="Phillimore B.J."/>
            <person name="Plumb R."/>
            <person name="Rajan J."/>
            <person name="Raymond C."/>
            <person name="Rouse G."/>
            <person name="Saenphimmachak C."/>
            <person name="Sehra H.K."/>
            <person name="Sheridan E."/>
            <person name="Shownkeen R."/>
            <person name="Sims S."/>
            <person name="Skuce C.D."/>
            <person name="Smith M."/>
            <person name="Steward C."/>
            <person name="Subramanian S."/>
            <person name="Sycamore N."/>
            <person name="Tracey A."/>
            <person name="Tromans A."/>
            <person name="Van Helmond Z."/>
            <person name="Wall M."/>
            <person name="Wallis J.M."/>
            <person name="White S."/>
            <person name="Whitehead S.L."/>
            <person name="Wilkinson J.E."/>
            <person name="Willey D.L."/>
            <person name="Williams H."/>
            <person name="Wilming L."/>
            <person name="Wray P.W."/>
            <person name="Wu Z."/>
            <person name="Coulson A."/>
            <person name="Vaudin M."/>
            <person name="Sulston J.E."/>
            <person name="Durbin R.M."/>
            <person name="Hubbard T."/>
            <person name="Wooster R."/>
            <person name="Dunham I."/>
            <person name="Carter N.P."/>
            <person name="McVean G."/>
            <person name="Ross M.T."/>
            <person name="Harrow J."/>
            <person name="Olson M.V."/>
            <person name="Beck S."/>
            <person name="Rogers J."/>
            <person name="Bentley D.R."/>
        </authorList>
    </citation>
    <scope>NUCLEOTIDE SEQUENCE [LARGE SCALE GENOMIC DNA]</scope>
</reference>
<reference key="7">
    <citation type="journal article" date="2004" name="Genome Res.">
        <title>The status, quality, and expansion of the NIH full-length cDNA project: the Mammalian Gene Collection (MGC).</title>
        <authorList>
            <consortium name="The MGC Project Team"/>
        </authorList>
    </citation>
    <scope>NUCLEOTIDE SEQUENCE [LARGE SCALE MRNA] (ISOFORM 1)</scope>
    <source>
        <tissue>Uterus</tissue>
    </source>
</reference>
<reference key="8">
    <citation type="journal article" date="2015" name="Mol. Cell">
        <title>Mitochondrial ADCK3 employs an atypical protein kinase-like fold to enable coenzyme Q biosynthesis.</title>
        <authorList>
            <person name="Stefely J.A."/>
            <person name="Reidenbach A.G."/>
            <person name="Ulbrich A."/>
            <person name="Oruganty K."/>
            <person name="Floyd B.J."/>
            <person name="Jochem A."/>
            <person name="Saunders J.M."/>
            <person name="Johnson I.E."/>
            <person name="Minogue C.E."/>
            <person name="Wrobel R.L."/>
            <person name="Barber G.E."/>
            <person name="Lee D."/>
            <person name="Li S."/>
            <person name="Kannan N."/>
            <person name="Coon J.J."/>
            <person name="Bingman C.A."/>
            <person name="Pagliarini D.J."/>
        </authorList>
    </citation>
    <scope>PROTEIN SEQUENCE OF N-TERMINUS</scope>
    <scope>X-RAY CRYSTALLOGRAPHY (1.64 ANGSTROMS) OF 256-647</scope>
    <scope>FUNCTION</scope>
    <scope>SUBCELLULAR LOCATION</scope>
    <scope>PATHWAY</scope>
    <scope>DOMAIN</scope>
    <scope>ACTIVITY REGULATION</scope>
    <scope>MUTAGENESIS OF LYS-276; GLN-279; ALA-339; LYS-358; GLU-405; GLU-411; ASP-488; ASN-493; ASP-507 AND ARG-611</scope>
    <scope>CHARACTERIZATION OF VARIANTS COQ10D4 TRP-299; CYS-429; SER-549 AND LYS-551</scope>
</reference>
<reference key="9">
    <citation type="journal article" date="2010" name="Mitochondrion">
        <title>Nonsense mutations in CABC1/ADCK3 cause progressive cerebellar ataxia and atrophy.</title>
        <authorList>
            <person name="Gerards M."/>
            <person name="van den Bosch B."/>
            <person name="Calis C."/>
            <person name="Schoonderwoerd K."/>
            <person name="van Engelen K."/>
            <person name="Tijssen M."/>
            <person name="de Coo R."/>
            <person name="van der Kooi A."/>
            <person name="Smeets H."/>
        </authorList>
    </citation>
    <scope>INVOLVEMENT IN COQ10D4</scope>
</reference>
<reference key="10">
    <citation type="journal article" date="2011" name="BMC Syst. Biol.">
        <title>Initial characterization of the human central proteome.</title>
        <authorList>
            <person name="Burkard T.R."/>
            <person name="Planyavsky M."/>
            <person name="Kaupe I."/>
            <person name="Breitwieser F.P."/>
            <person name="Buerckstuemmer T."/>
            <person name="Bennett K.L."/>
            <person name="Superti-Furga G."/>
            <person name="Colinge J."/>
        </authorList>
    </citation>
    <scope>IDENTIFICATION BY MASS SPECTROMETRY [LARGE SCALE ANALYSIS]</scope>
</reference>
<reference key="11">
    <citation type="journal article" date="2011" name="Biochim. Biophys. Acta">
        <title>Expression of the human atypical kinase ADCK3 rescues coenzyme Q biosynthesis and phosphorylation of Coq polypeptides in yeast coq8 mutants.</title>
        <authorList>
            <person name="Xie L.X."/>
            <person name="Hsieh E.J."/>
            <person name="Watanabe S."/>
            <person name="Allan C.M."/>
            <person name="Chen J.Y."/>
            <person name="Tran U.C."/>
            <person name="Clarke C.F."/>
        </authorList>
    </citation>
    <scope>FUNCTION</scope>
</reference>
<reference key="12">
    <citation type="journal article" date="2013" name="J. Clin. Invest.">
        <title>ADCK4 mutations promote steroid-resistant nephrotic syndrome through CoQ10 biosynthesis disruption.</title>
        <authorList>
            <person name="Ashraf S."/>
            <person name="Gee H.Y."/>
            <person name="Woerner S."/>
            <person name="Xie L.X."/>
            <person name="Vega-Warner V."/>
            <person name="Lovric S."/>
            <person name="Fang H."/>
            <person name="Song X."/>
            <person name="Cattran D.C."/>
            <person name="Avila-Casado C."/>
            <person name="Paterson A.D."/>
            <person name="Nitschke P."/>
            <person name="Bole-Feysot C."/>
            <person name="Cochat P."/>
            <person name="Esteve-Rudd J."/>
            <person name="Haberberger B."/>
            <person name="Allen S.J."/>
            <person name="Zhou W."/>
            <person name="Airik R."/>
            <person name="Otto E.A."/>
            <person name="Barua M."/>
            <person name="Al-Hamed M.H."/>
            <person name="Kari J.A."/>
            <person name="Evans J."/>
            <person name="Bierzynska A."/>
            <person name="Saleem M.A."/>
            <person name="Bockenhauer D."/>
            <person name="Kleta R."/>
            <person name="El Desoky S."/>
            <person name="Hacihamdioglu D.O."/>
            <person name="Gok F."/>
            <person name="Washburn J."/>
            <person name="Wiggins R.C."/>
            <person name="Choi M."/>
            <person name="Lifton R.P."/>
            <person name="Levy S."/>
            <person name="Han Z."/>
            <person name="Salviati L."/>
            <person name="Prokisch H."/>
            <person name="Williams D.S."/>
            <person name="Pollak M."/>
            <person name="Clarke C.F."/>
            <person name="Pei Y."/>
            <person name="Antignac C."/>
            <person name="Hildebrandt F."/>
        </authorList>
    </citation>
    <scope>TISSUE SPECIFICITY</scope>
</reference>
<reference key="13">
    <citation type="journal article" date="2014" name="J. Am. Chem. Soc.">
        <title>A Gly-zipper motif mediates homodimerization of the transmembrane domain of the mitochondrial kinase ADCK3.</title>
        <authorList>
            <person name="Khadria A.S."/>
            <person name="Mueller B.K."/>
            <person name="Stefely J.A."/>
            <person name="Tan C.H."/>
            <person name="Pagliarini D.J."/>
            <person name="Senes A."/>
        </authorList>
    </citation>
    <scope>SUBUNIT</scope>
    <scope>SUBCELLULAR LOCATION</scope>
    <scope>MUTAGENESIS OF LEU-214; ALA-215; ASN-216; PHE-217; GLY-218; GLY-219; LEU-220; ALA-221; VAL-222; GLY-223; LEU-224; GLY-225; PHE-226; GLY-227; ALA-228; LEU-229 AND ALA-230</scope>
</reference>
<reference key="14">
    <citation type="journal article" date="2014" name="J. Neurol. Neurosurg. Psych.">
        <title>Autosomal-recessive cerebellar ataxia caused by a novel ADCK3 mutation that elongates the protein: clinical, genetic and biochemical characterisation.</title>
        <authorList>
            <person name="Liu Y.T."/>
            <person name="Hersheson J."/>
            <person name="Plagnol V."/>
            <person name="Fawcett K."/>
            <person name="Duberley K.E."/>
            <person name="Preza E."/>
            <person name="Hargreaves I.P."/>
            <person name="Chalasani A."/>
            <person name="Laura M."/>
            <person name="Wood N.W."/>
            <person name="Reilly M.M."/>
            <person name="Houlden H."/>
        </authorList>
    </citation>
    <scope>INVOLVEMENT IN COQ10D4</scope>
</reference>
<reference key="15">
    <citation type="journal article" date="2015" name="Protein Expr. Purif.">
        <title>Preparation and characterization of human ADCK3, a putative atypical kinase.</title>
        <authorList>
            <person name="Wheeler B."/>
            <person name="Jia Z."/>
        </authorList>
    </citation>
    <scope>FUNCTION</scope>
</reference>
<reference key="16">
    <citation type="journal article" date="2015" name="Proteomics">
        <title>N-terminome analysis of the human mitochondrial proteome.</title>
        <authorList>
            <person name="Vaca Jacome A.S."/>
            <person name="Rabilloud T."/>
            <person name="Schaeffer-Reiss C."/>
            <person name="Rompais M."/>
            <person name="Ayoub D."/>
            <person name="Lane L."/>
            <person name="Bairoch A."/>
            <person name="Van Dorsselaer A."/>
            <person name="Carapito C."/>
        </authorList>
    </citation>
    <scope>IDENTIFICATION BY MASS SPECTROMETRY [LARGE SCALE ANALYSIS]</scope>
</reference>
<reference key="17">
    <citation type="journal article" date="2016" name="Mol. Cell">
        <title>Cerebellar ataxia and coenzyme Q deficiency through loss of unorthodox kinase activity.</title>
        <authorList>
            <person name="Stefely J.A."/>
            <person name="Licitra F."/>
            <person name="Laredj L."/>
            <person name="Reidenbach A.G."/>
            <person name="Kemmerer Z.A."/>
            <person name="Grangeray A."/>
            <person name="Jaeg-Ehret T."/>
            <person name="Minogue C.E."/>
            <person name="Ulbrich A."/>
            <person name="Hutchins P.D."/>
            <person name="Wilkerson E.M."/>
            <person name="Ruan Z."/>
            <person name="Aydin D."/>
            <person name="Hebert A.S."/>
            <person name="Guo X."/>
            <person name="Freiberger E.C."/>
            <person name="Reutenauer L."/>
            <person name="Jochem A."/>
            <person name="Chergova M."/>
            <person name="Johnson I.E."/>
            <person name="Lohman D.C."/>
            <person name="Rush M.J."/>
            <person name="Kwiecien N.W."/>
            <person name="Singh P.K."/>
            <person name="Schlagowski A.I."/>
            <person name="Floyd B.J."/>
            <person name="Forsman U."/>
            <person name="Sindelar P.J."/>
            <person name="Westphall M.S."/>
            <person name="Pierrel F."/>
            <person name="Zoll J."/>
            <person name="Dal Peraro M."/>
            <person name="Kannan N."/>
            <person name="Bingman C.A."/>
            <person name="Coon J.J."/>
            <person name="Isope P."/>
            <person name="Puccio H."/>
            <person name="Pagliarini D.J."/>
        </authorList>
    </citation>
    <scope>FUNCTION</scope>
    <scope>INTERACTION WITH THE COQ ENZYME COMPLEX</scope>
    <scope>DOMAIN</scope>
    <scope>X-RAY CRYSTALLOGRAPHY (2.30 ANGSTROMS) OF 256-647 IN COMPLEX WITH ANP NUCLEOTIDE</scope>
    <scope>ACTIVITY REGULATION</scope>
    <scope>MUTAGENESIS OF LYS-276 AND ASP-507</scope>
</reference>
<reference key="18">
    <citation type="journal article" date="2016" name="Mol. Cell">
        <title>Mitochondrial protein interaction mapping identifies regulators of respiratory chain function.</title>
        <authorList>
            <person name="Floyd B.J."/>
            <person name="Wilkerson E.M."/>
            <person name="Veling M.T."/>
            <person name="Minogue C.E."/>
            <person name="Xia C."/>
            <person name="Beebe E.T."/>
            <person name="Wrobel R.L."/>
            <person name="Cho H."/>
            <person name="Kremer L.S."/>
            <person name="Alston C.L."/>
            <person name="Gromek K.A."/>
            <person name="Dolan B.K."/>
            <person name="Ulbrich A."/>
            <person name="Stefely J.A."/>
            <person name="Bohl S.L."/>
            <person name="Werner K.M."/>
            <person name="Jochem A."/>
            <person name="Westphall M.S."/>
            <person name="Rensvold J.W."/>
            <person name="Taylor R.W."/>
            <person name="Prokisch H."/>
            <person name="Kim J.J."/>
            <person name="Coon J.J."/>
            <person name="Pagliarini D.J."/>
        </authorList>
    </citation>
    <scope>INTERACTION WITH THE COQ ENZYME COMPLEX</scope>
</reference>
<reference key="19">
    <citation type="journal article" date="2021" name="Elife">
        <title>A subcellular map of the human kinome.</title>
        <authorList>
            <person name="Zhang H."/>
            <person name="Cao X."/>
            <person name="Tang M."/>
            <person name="Zhong G."/>
            <person name="Si Y."/>
            <person name="Li H."/>
            <person name="Zhu F."/>
            <person name="Liao Q."/>
            <person name="Li L."/>
            <person name="Zhao J."/>
            <person name="Feng J."/>
            <person name="Li S."/>
            <person name="Wang C."/>
            <person name="Kaulich M."/>
            <person name="Wang F."/>
            <person name="Chen L."/>
            <person name="Li L."/>
            <person name="Xia Z."/>
            <person name="Liang T."/>
            <person name="Lu H."/>
            <person name="Feng X.H."/>
            <person name="Zhao B."/>
        </authorList>
    </citation>
    <scope>SUBCELLULAR LOCATION</scope>
</reference>
<reference key="20">
    <citation type="journal article" date="2024" name="Nat. Catal.">
        <title>In vitro construction of the COQ metabolon unveils the molecular determinants of coenzyme Q biosynthesis.</title>
        <authorList>
            <person name="Nicoll C.R."/>
            <person name="Alvigini L."/>
            <person name="Gottinger A."/>
            <person name="Cecchini D."/>
            <person name="Mannucci B."/>
            <person name="Corana F."/>
            <person name="Mascotti M.L."/>
            <person name="Mattevi A."/>
        </authorList>
    </citation>
    <scope>FUNCTION</scope>
</reference>
<reference evidence="35 36" key="21">
    <citation type="journal article" date="2023" name="Nat. Chem. Biol.">
        <title>Small-molecule inhibition of the archetypal UbiB protein COQ8.</title>
        <authorList>
            <person name="Murray N.H."/>
            <person name="Asquith C.R.M."/>
            <person name="Fang Z."/>
            <person name="East M.P."/>
            <person name="Ptak N."/>
            <person name="Smith R.W."/>
            <person name="Vasta J.D."/>
            <person name="Zimprich C.A."/>
            <person name="Corona C.R."/>
            <person name="Robers M.B."/>
            <person name="Johnson G.L."/>
            <person name="Bingman C.A."/>
            <person name="Pagliarini D.J."/>
        </authorList>
    </citation>
    <scope>X-RAY CRYSTALLOGRAPHY (1.90 ANGSTROMS) OF 256-647 IN COMPLEX WITH UNC-CA157 INHIBITOR</scope>
    <scope>FUNCTION</scope>
    <scope>ACTIVITY REGULATION</scope>
    <scope>PATHWAY</scope>
    <scope>MUTAGENESIS OF PHE-495</scope>
</reference>
<reference key="22">
    <citation type="journal article" date="2007" name="Nature">
        <title>Patterns of somatic mutation in human cancer genomes.</title>
        <authorList>
            <person name="Greenman C."/>
            <person name="Stephens P."/>
            <person name="Smith R."/>
            <person name="Dalgliesh G.L."/>
            <person name="Hunter C."/>
            <person name="Bignell G."/>
            <person name="Davies H."/>
            <person name="Teague J."/>
            <person name="Butler A."/>
            <person name="Stevens C."/>
            <person name="Edkins S."/>
            <person name="O'Meara S."/>
            <person name="Vastrik I."/>
            <person name="Schmidt E.E."/>
            <person name="Avis T."/>
            <person name="Barthorpe S."/>
            <person name="Bhamra G."/>
            <person name="Buck G."/>
            <person name="Choudhury B."/>
            <person name="Clements J."/>
            <person name="Cole J."/>
            <person name="Dicks E."/>
            <person name="Forbes S."/>
            <person name="Gray K."/>
            <person name="Halliday K."/>
            <person name="Harrison R."/>
            <person name="Hills K."/>
            <person name="Hinton J."/>
            <person name="Jenkinson A."/>
            <person name="Jones D."/>
            <person name="Menzies A."/>
            <person name="Mironenko T."/>
            <person name="Perry J."/>
            <person name="Raine K."/>
            <person name="Richardson D."/>
            <person name="Shepherd R."/>
            <person name="Small A."/>
            <person name="Tofts C."/>
            <person name="Varian J."/>
            <person name="Webb T."/>
            <person name="West S."/>
            <person name="Widaa S."/>
            <person name="Yates A."/>
            <person name="Cahill D.P."/>
            <person name="Louis D.N."/>
            <person name="Goldstraw P."/>
            <person name="Nicholson A.G."/>
            <person name="Brasseur F."/>
            <person name="Looijenga L."/>
            <person name="Weber B.L."/>
            <person name="Chiew Y.-E."/>
            <person name="DeFazio A."/>
            <person name="Greaves M.F."/>
            <person name="Green A.R."/>
            <person name="Campbell P."/>
            <person name="Birney E."/>
            <person name="Easton D.F."/>
            <person name="Chenevix-Trench G."/>
            <person name="Tan M.-H."/>
            <person name="Khoo S.K."/>
            <person name="Teh B.T."/>
            <person name="Yuen S.T."/>
            <person name="Leung S.Y."/>
            <person name="Wooster R."/>
            <person name="Futreal P.A."/>
            <person name="Stratton M.R."/>
        </authorList>
    </citation>
    <scope>VARIANT [LARGE SCALE ANALYSIS] THR-341</scope>
</reference>
<reference key="23">
    <citation type="journal article" date="2008" name="Am. J. Hum. Genet.">
        <title>CABC1 gene mutations cause ubiquinone deficiency with cerebellar ataxia and seizures.</title>
        <authorList>
            <person name="Mollet J."/>
            <person name="Delahodde A."/>
            <person name="Serre V."/>
            <person name="Chretien D."/>
            <person name="Schlemmer D."/>
            <person name="Lombes A."/>
            <person name="Boddaert N."/>
            <person name="Desguerre I."/>
            <person name="de Lonlay P."/>
            <person name="de Baulny H.O."/>
            <person name="Munnich A."/>
            <person name="Roetig A."/>
        </authorList>
    </citation>
    <scope>VARIANTS COQ10D4 TRP-213; VAL-272; ASP-272 AND LYS-551</scope>
</reference>
<reference key="24">
    <citation type="journal article" date="2008" name="Am. J. Hum. Genet.">
        <title>ADCK3, an ancestral kinase, is mutated in a form of recessive ataxia associated with coenzyme Q10 deficiency.</title>
        <authorList>
            <person name="Lagier-Tourenne C."/>
            <person name="Tazir M."/>
            <person name="Lopez L.C."/>
            <person name="Quinzii C.M."/>
            <person name="Assoum M."/>
            <person name="Drouot N."/>
            <person name="Busso C."/>
            <person name="Makri S."/>
            <person name="Ali-Pacha L."/>
            <person name="Benhassine T."/>
            <person name="Anheim M."/>
            <person name="Lynch D.R."/>
            <person name="Thibault C."/>
            <person name="Plewniak F."/>
            <person name="Bianchetti L."/>
            <person name="Tranchant C."/>
            <person name="Poch O."/>
            <person name="DiMauro S."/>
            <person name="Mandel J.-L."/>
            <person name="Barros M.H."/>
            <person name="Hirano M."/>
            <person name="Koenig M."/>
        </authorList>
    </citation>
    <scope>VARIANTS COQ10D4 CYS-514; SER-549 AND THR-584 DEL</scope>
</reference>
<reference key="25">
    <citation type="journal article" date="2012" name="J. Neurol. Neurosurg. Psych.">
        <title>Adult-onset cerebellar ataxia due to mutations in CABC1/ADCK3.</title>
        <authorList>
            <person name="Horvath R."/>
            <person name="Czermin B."/>
            <person name="Gulati S."/>
            <person name="Demuth S."/>
            <person name="Houge G."/>
            <person name="Pyle A."/>
            <person name="Dineiger C."/>
            <person name="Blakely E.L."/>
            <person name="Hassani A."/>
            <person name="Foley C."/>
            <person name="Brodhun M."/>
            <person name="Storm K."/>
            <person name="Kirschner J."/>
            <person name="Gorman G.S."/>
            <person name="Lochmuller H."/>
            <person name="Holinski-Feder E."/>
            <person name="Taylor R.W."/>
            <person name="Chinnery P.F."/>
        </authorList>
    </citation>
    <scope>VARIANTS COQ10D4 TRP-213; CYS-271; ASP-272; VAL-272; TRP-299; THR-304; VAL-304; CYS-429; SER-549 AND LYS-551</scope>
</reference>
<reference key="26">
    <citation type="journal article" date="2014" name="JIMD Rep.">
        <title>Heterozygous mutations in the ADCK3 gene in siblings with cerebellar atrophy and extreme phenotypic variability.</title>
        <authorList>
            <person name="Blumkin L."/>
            <person name="Leshinsky-Silver E."/>
            <person name="Zerem A."/>
            <person name="Yosovich K."/>
            <person name="Lerman-Sagie T."/>
            <person name="Lev D."/>
        </authorList>
    </citation>
    <scope>VARIANT COQ10D4 ARG-602</scope>
</reference>
<reference key="27">
    <citation type="journal article" date="2016" name="Clin. Genet.">
        <title>Cerebellar ataxia and severe muscle CoQ10 deficiency in a patient with a novel mutation in ADCK3.</title>
        <authorList>
            <person name="Barca E."/>
            <person name="Musumeci O."/>
            <person name="Montagnese F."/>
            <person name="Marino S."/>
            <person name="Granata F."/>
            <person name="Nunnari D."/>
            <person name="Peverelli L."/>
            <person name="DiMauro S."/>
            <person name="Quinzii C.M."/>
            <person name="Toscano A."/>
        </authorList>
    </citation>
    <scope>INVOLVEMENT IN COQ10D4</scope>
</reference>
<reference key="28">
    <citation type="journal article" date="2016" name="Eur. J. Neurol.">
        <title>ADCK3 mutations with epilepsy, stroke-like episodes and ataxia: a POLG mimic?</title>
        <authorList>
            <person name="Hikmat O."/>
            <person name="Tzoulis C."/>
            <person name="Knappskog P.M."/>
            <person name="Johansson S."/>
            <person name="Boman H."/>
            <person name="Sztromwasser P."/>
            <person name="Lien E."/>
            <person name="Brodtkorb E."/>
            <person name="Ghezzi D."/>
            <person name="Bindoff L.A."/>
        </authorList>
    </citation>
    <scope>VARIANTS COQ10D4 TRP-299 AND VAL-578</scope>
</reference>
<accession>Q8NI60</accession>
<accession>Q5T7A5</accession>
<accession>Q63HK0</accession>
<accession>Q8NCJ6</accession>
<accession>Q9HBQ1</accession>
<accession>Q9NQ67</accession>
<organism>
    <name type="scientific">Homo sapiens</name>
    <name type="common">Human</name>
    <dbReference type="NCBI Taxonomy" id="9606"/>
    <lineage>
        <taxon>Eukaryota</taxon>
        <taxon>Metazoa</taxon>
        <taxon>Chordata</taxon>
        <taxon>Craniata</taxon>
        <taxon>Vertebrata</taxon>
        <taxon>Euteleostomi</taxon>
        <taxon>Mammalia</taxon>
        <taxon>Eutheria</taxon>
        <taxon>Euarchontoglires</taxon>
        <taxon>Primates</taxon>
        <taxon>Haplorrhini</taxon>
        <taxon>Catarrhini</taxon>
        <taxon>Hominidae</taxon>
        <taxon>Homo</taxon>
    </lineage>
</organism>
<feature type="transit peptide" description="Mitochondrion" evidence="15">
    <location>
        <begin position="1"/>
        <end position="162"/>
    </location>
</feature>
<feature type="chain" id="PRO_0000000262" description="Atypical kinase COQ8A, mitochondrial">
    <location>
        <begin position="163"/>
        <end position="647"/>
    </location>
</feature>
<feature type="transmembrane region" description="Helical" evidence="2 30">
    <location>
        <begin position="214"/>
        <end position="230"/>
    </location>
</feature>
<feature type="domain" description="Protein kinase">
    <location>
        <begin position="329"/>
        <end position="518"/>
    </location>
</feature>
<feature type="region of interest" description="Disordered" evidence="3">
    <location>
        <begin position="90"/>
        <end position="117"/>
    </location>
</feature>
<feature type="region of interest" description="Disordered" evidence="3">
    <location>
        <begin position="182"/>
        <end position="203"/>
    </location>
</feature>
<feature type="short sequence motif" description="KxGQ motif" evidence="15">
    <location>
        <begin position="276"/>
        <end position="279"/>
    </location>
</feature>
<feature type="short sequence motif" description="AAAS motif" evidence="15">
    <location>
        <begin position="337"/>
        <end position="340"/>
    </location>
</feature>
<feature type="compositionally biased region" description="Low complexity" evidence="3">
    <location>
        <begin position="94"/>
        <end position="106"/>
    </location>
</feature>
<feature type="active site" description="Proton acceptor" evidence="32">
    <location>
        <position position="488"/>
    </location>
</feature>
<feature type="binding site" evidence="19 31 34">
    <location>
        <position position="340"/>
    </location>
    <ligand>
        <name>ATP</name>
        <dbReference type="ChEBI" id="CHEBI:30616"/>
    </ligand>
</feature>
<feature type="binding site" evidence="19 34">
    <location>
        <position position="358"/>
    </location>
    <ligand>
        <name>ATP</name>
        <dbReference type="ChEBI" id="CHEBI:30616"/>
    </ligand>
</feature>
<feature type="binding site" evidence="19 34">
    <location>
        <begin position="445"/>
        <end position="448"/>
    </location>
    <ligand>
        <name>ATP</name>
        <dbReference type="ChEBI" id="CHEBI:30616"/>
    </ligand>
</feature>
<feature type="binding site" evidence="19 34">
    <location>
        <position position="493"/>
    </location>
    <ligand>
        <name>ATP</name>
        <dbReference type="ChEBI" id="CHEBI:30616"/>
    </ligand>
</feature>
<feature type="binding site" evidence="19 34">
    <location>
        <position position="507"/>
    </location>
    <ligand>
        <name>ATP</name>
        <dbReference type="ChEBI" id="CHEBI:30616"/>
    </ligand>
</feature>
<feature type="splice variant" id="VSP_022351" description="In isoform 2." evidence="25">
    <location>
        <begin position="1"/>
        <end position="484"/>
    </location>
</feature>
<feature type="splice variant" id="VSP_022352" description="In isoform 4." evidence="28">
    <location>
        <begin position="1"/>
        <end position="279"/>
    </location>
</feature>
<feature type="splice variant" id="VSP_022353" description="In isoform 3." evidence="26">
    <location>
        <begin position="1"/>
        <end position="52"/>
    </location>
</feature>
<feature type="sequence variant" id="VAR_020319" description="In dbSNP:rs2297411.">
    <original>H</original>
    <variation>Q</variation>
    <location>
        <position position="85"/>
    </location>
</feature>
<feature type="sequence variant" id="VAR_044402" description="In COQ10D4; dbSNP:rs119468005." evidence="6 10">
    <original>R</original>
    <variation>W</variation>
    <location>
        <position position="213"/>
    </location>
</feature>
<feature type="sequence variant" id="VAR_072622" description="In COQ10D4; dbSNP:rs145034527." evidence="10">
    <original>R</original>
    <variation>C</variation>
    <location>
        <position position="271"/>
    </location>
</feature>
<feature type="sequence variant" id="VAR_044403" description="In COQ10D4; dbSNP:rs119468006." evidence="6 10">
    <original>G</original>
    <variation>D</variation>
    <location>
        <position position="272"/>
    </location>
</feature>
<feature type="sequence variant" id="VAR_044404" description="In COQ10D4; dbSNP:rs119468006." evidence="6 10">
    <original>G</original>
    <variation>V</variation>
    <location>
        <position position="272"/>
    </location>
</feature>
<feature type="sequence variant" id="VAR_072623" description="In COQ10D4; decreased stability; dbSNP:rs201908721." evidence="10 15 18">
    <original>R</original>
    <variation>W</variation>
    <location>
        <position position="299"/>
    </location>
</feature>
<feature type="sequence variant" id="VAR_072624" description="In COQ10D4; dbSNP:rs778798354." evidence="10">
    <original>A</original>
    <variation>T</variation>
    <location>
        <position position="304"/>
    </location>
</feature>
<feature type="sequence variant" id="VAR_072625" description="In COQ10D4; dbSNP:rs748118737." evidence="10">
    <original>A</original>
    <variation>V</variation>
    <location>
        <position position="304"/>
    </location>
</feature>
<feature type="sequence variant" id="VAR_045576" description="In dbSNP:rs55798516." evidence="5">
    <original>I</original>
    <variation>T</variation>
    <location>
        <position position="341"/>
    </location>
</feature>
<feature type="sequence variant" id="VAR_072626" description="In COQ10D4; decreased stability; dbSNP:rs144147839." evidence="10 15">
    <original>Y</original>
    <variation>C</variation>
    <location>
        <position position="429"/>
    </location>
</feature>
<feature type="sequence variant" id="VAR_044405" description="In COQ10D4; dbSNP:rs119468008." evidence="7">
    <original>Y</original>
    <variation>C</variation>
    <location>
        <position position="514"/>
    </location>
</feature>
<feature type="sequence variant" id="VAR_044406" description="In COQ10D4; decreased stability; dbSNP:rs119468009." evidence="7 10 15">
    <original>G</original>
    <variation>S</variation>
    <location>
        <position position="549"/>
    </location>
</feature>
<feature type="sequence variant" id="VAR_044407" description="In COQ10D4; decreased stability; dbSNP:rs119468004." evidence="6 10 15">
    <original>E</original>
    <variation>K</variation>
    <location>
        <position position="551"/>
    </location>
</feature>
<feature type="sequence variant" id="VAR_076860" description="In COQ10D4; uncertain significance." evidence="18">
    <original>F</original>
    <variation>V</variation>
    <location>
        <position position="578"/>
    </location>
</feature>
<feature type="sequence variant" id="VAR_044408" description="In COQ10D4; dbSNP:rs387906299." evidence="7">
    <location>
        <position position="584"/>
    </location>
</feature>
<feature type="sequence variant" id="VAR_072627" description="In COQ10D4; dbSNP:rs61995958." evidence="11">
    <original>P</original>
    <variation>R</variation>
    <location>
        <position position="602"/>
    </location>
</feature>
<feature type="mutagenesis site" description="Strongly impairs homodimerization." evidence="14">
    <original>L</original>
    <variation>A</variation>
    <variation>I</variation>
    <variation>L</variation>
    <variation>F</variation>
    <location>
        <position position="214"/>
    </location>
</feature>
<feature type="mutagenesis site" description="Slightly impaired homodimerization." evidence="14">
    <original>L</original>
    <variation>I</variation>
    <variation>F</variation>
    <variation>G</variation>
    <variation>V</variation>
    <location>
        <position position="214"/>
    </location>
</feature>
<feature type="mutagenesis site" description="Does not impair homodimerization." evidence="14">
    <original>A</original>
    <variation>I</variation>
    <variation>L</variation>
    <variation>G</variation>
    <location>
        <position position="215"/>
    </location>
</feature>
<feature type="mutagenesis site" description="Does not impair homodimerization." evidence="14">
    <original>N</original>
    <variation>A</variation>
    <variation>L</variation>
    <variation>F</variation>
    <variation>M</variation>
    <location>
        <position position="216"/>
    </location>
</feature>
<feature type="mutagenesis site" description="Slightly impaired homodimerization." evidence="14">
    <original>F</original>
    <variation>A</variation>
    <location>
        <position position="217"/>
    </location>
</feature>
<feature type="mutagenesis site" description="Slightly impaired homodimerization." evidence="14">
    <original>G</original>
    <variation>I</variation>
    <variation>L</variation>
    <variation>F</variation>
    <location>
        <position position="218"/>
    </location>
</feature>
<feature type="mutagenesis site" description="Slightly impaired homodimerization." evidence="14">
    <original>G</original>
    <variation>A</variation>
    <variation>F</variation>
    <location>
        <position position="219"/>
    </location>
</feature>
<feature type="mutagenesis site" description="Strongly impairs homodimerization." evidence="14">
    <original>G</original>
    <variation>I</variation>
    <location>
        <position position="219"/>
    </location>
</feature>
<feature type="mutagenesis site" description="Impaired homodimerization." evidence="14">
    <original>L</original>
    <variation>G</variation>
    <location>
        <position position="220"/>
    </location>
</feature>
<feature type="mutagenesis site" description="Slightly impaired homodimerization." evidence="14">
    <original>A</original>
    <variation>L</variation>
    <location>
        <position position="221"/>
    </location>
</feature>
<feature type="mutagenesis site" description="Slightly impaired homodimerization." evidence="14">
    <original>V</original>
    <variation>A</variation>
    <location>
        <position position="222"/>
    </location>
</feature>
<feature type="mutagenesis site" description="Strongly impairs homodimerization." evidence="14">
    <original>G</original>
    <variation>A</variation>
    <variation>I</variation>
    <variation>L</variation>
    <variation>F</variation>
    <location>
        <position position="223"/>
    </location>
</feature>
<feature type="mutagenesis site" description="Impaired homodimerization." evidence="14">
    <original>L</original>
    <variation>V</variation>
    <location>
        <position position="224"/>
    </location>
</feature>
<feature type="mutagenesis site" description="Slightly impaired homodimerization." evidence="14">
    <original>G</original>
    <variation>L</variation>
    <location>
        <position position="225"/>
    </location>
</feature>
<feature type="mutagenesis site" description="Slightly impaired homodimerization." evidence="14">
    <original>F</original>
    <variation>A</variation>
    <location>
        <position position="226"/>
    </location>
</feature>
<feature type="mutagenesis site" description="Strongly impairs homodimerization." evidence="14">
    <original>G</original>
    <variation>V</variation>
    <variation>F</variation>
    <variation>L</variation>
    <variation>I</variation>
    <location>
        <position position="227"/>
    </location>
</feature>
<feature type="mutagenesis site" description="Does not impair homodimerization." evidence="14">
    <original>A</original>
    <variation>I</variation>
    <variation>L</variation>
    <variation>F</variation>
    <location>
        <position position="228"/>
    </location>
</feature>
<feature type="mutagenesis site" description="Slightly impaired homodimerization." evidence="14">
    <original>L</original>
    <variation>A</variation>
    <location>
        <position position="229"/>
    </location>
</feature>
<feature type="mutagenesis site" description="Slightly impaired homodimerization." evidence="14">
    <original>A</original>
    <variation>I</variation>
    <location>
        <position position="230"/>
    </location>
</feature>
<feature type="mutagenesis site" description="Does not affect selectivity for binding ADP or ATP. Impaired multi-subunit COQ enzyme complex." evidence="15 19">
    <original>K</original>
    <variation>R</variation>
    <variation>H</variation>
    <location>
        <position position="276"/>
    </location>
</feature>
<feature type="mutagenesis site" description="Does not affect selectivity for binding ADP or ATP." evidence="15">
    <original>Q</original>
    <variation>R</variation>
    <variation>H</variation>
    <location>
        <position position="279"/>
    </location>
</feature>
<feature type="mutagenesis site" description="Enables autophosphorylation but inhibits coenzyme Q biosynthesis in vivo." evidence="15">
    <original>A</original>
    <variation>G</variation>
    <location>
        <position position="339"/>
    </location>
</feature>
<feature type="mutagenesis site" description="Abolishes binding ADP or ATP." evidence="15">
    <original>K</original>
    <variation>R</variation>
    <location>
        <position position="358"/>
    </location>
</feature>
<feature type="mutagenesis site" description="Slightly affects selectivity for binding ADP or ATP." evidence="15">
    <original>E</original>
    <variation>A</variation>
    <variation>Q</variation>
    <location>
        <position position="405"/>
    </location>
</feature>
<feature type="mutagenesis site" description="Impaired binding ADP or ATP." evidence="15">
    <original>E</original>
    <variation>Q</variation>
    <location>
        <position position="411"/>
    </location>
</feature>
<feature type="mutagenesis site" description="Impaired binding ADP or ATP." evidence="15">
    <original>D</original>
    <variation>N</variation>
    <location>
        <position position="488"/>
    </location>
</feature>
<feature type="mutagenesis site" description="Impaired binding ADP or ATP." evidence="15">
    <original>N</original>
    <variation>A</variation>
    <location>
        <position position="493"/>
    </location>
</feature>
<feature type="mutagenesis site" description="Decreased binding to UNC-CA157 inhibitor." evidence="22">
    <original>F</original>
    <variation>A</variation>
    <variation>L</variation>
    <location>
        <position position="495"/>
    </location>
</feature>
<feature type="mutagenesis site" description="Strongly impairs binding ADP or ATP. Impaired multi-subunit COQ enzyme complex." evidence="15 19">
    <original>D</original>
    <variation>N</variation>
    <location>
        <position position="507"/>
    </location>
</feature>
<feature type="mutagenesis site" description="Does not affect selectivity for binding ADP or ATP." evidence="15">
    <original>R</original>
    <variation>A</variation>
    <variation>Q</variation>
    <location>
        <position position="611"/>
    </location>
</feature>
<feature type="sequence conflict" description="In Ref. 4; BAC11143." evidence="29" ref="4">
    <original>IQ</original>
    <variation>VR</variation>
    <location>
        <begin position="283"/>
        <end position="284"/>
    </location>
</feature>
<feature type="helix" evidence="37">
    <location>
        <begin position="260"/>
        <end position="269"/>
    </location>
</feature>
<feature type="helix" evidence="37">
    <location>
        <begin position="271"/>
        <end position="281"/>
    </location>
</feature>
<feature type="strand" evidence="37">
    <location>
        <begin position="284"/>
        <end position="289"/>
    </location>
</feature>
<feature type="helix" evidence="37">
    <location>
        <begin position="291"/>
        <end position="302"/>
    </location>
</feature>
<feature type="helix" evidence="37">
    <location>
        <begin position="303"/>
        <end position="306"/>
    </location>
</feature>
<feature type="helix" evidence="37">
    <location>
        <begin position="309"/>
        <end position="320"/>
    </location>
</feature>
<feature type="helix" evidence="37">
    <location>
        <begin position="325"/>
        <end position="327"/>
    </location>
</feature>
<feature type="strand" evidence="37">
    <location>
        <begin position="328"/>
        <end position="331"/>
    </location>
</feature>
<feature type="strand" evidence="37">
    <location>
        <begin position="336"/>
        <end position="339"/>
    </location>
</feature>
<feature type="strand" evidence="37">
    <location>
        <begin position="342"/>
        <end position="349"/>
    </location>
</feature>
<feature type="strand" evidence="37">
    <location>
        <begin position="354"/>
        <end position="360"/>
    </location>
</feature>
<feature type="turn" evidence="37">
    <location>
        <begin position="362"/>
        <end position="364"/>
    </location>
</feature>
<feature type="helix" evidence="37">
    <location>
        <begin position="365"/>
        <end position="367"/>
    </location>
</feature>
<feature type="helix" evidence="37">
    <location>
        <begin position="368"/>
        <end position="382"/>
    </location>
</feature>
<feature type="strand" evidence="38">
    <location>
        <begin position="387"/>
        <end position="389"/>
    </location>
</feature>
<feature type="helix" evidence="37">
    <location>
        <begin position="391"/>
        <end position="393"/>
    </location>
</feature>
<feature type="helix" evidence="37">
    <location>
        <begin position="395"/>
        <end position="405"/>
    </location>
</feature>
<feature type="helix" evidence="37">
    <location>
        <begin position="408"/>
        <end position="421"/>
    </location>
</feature>
<feature type="turn" evidence="37">
    <location>
        <begin position="422"/>
        <end position="424"/>
    </location>
</feature>
<feature type="strand" evidence="37">
    <location>
        <begin position="426"/>
        <end position="429"/>
    </location>
</feature>
<feature type="helix" evidence="37">
    <location>
        <begin position="435"/>
        <end position="437"/>
    </location>
</feature>
<feature type="strand" evidence="37">
    <location>
        <begin position="442"/>
        <end position="446"/>
    </location>
</feature>
<feature type="strand" evidence="37">
    <location>
        <begin position="450"/>
        <end position="452"/>
    </location>
</feature>
<feature type="helix" evidence="37">
    <location>
        <begin position="453"/>
        <end position="455"/>
    </location>
</feature>
<feature type="helix" evidence="37">
    <location>
        <begin position="461"/>
        <end position="480"/>
    </location>
</feature>
<feature type="strand" evidence="37">
    <location>
        <begin position="484"/>
        <end position="488"/>
    </location>
</feature>
<feature type="helix" evidence="37">
    <location>
        <begin position="491"/>
        <end position="493"/>
    </location>
</feature>
<feature type="strand" evidence="37">
    <location>
        <begin position="494"/>
        <end position="497"/>
    </location>
</feature>
<feature type="turn" evidence="37">
    <location>
        <begin position="498"/>
        <end position="501"/>
    </location>
</feature>
<feature type="strand" evidence="37">
    <location>
        <begin position="502"/>
        <end position="505"/>
    </location>
</feature>
<feature type="helix" evidence="38">
    <location>
        <begin position="508"/>
        <end position="510"/>
    </location>
</feature>
<feature type="strand" evidence="37">
    <location>
        <begin position="511"/>
        <end position="513"/>
    </location>
</feature>
<feature type="helix" evidence="37">
    <location>
        <begin position="516"/>
        <end position="530"/>
    </location>
</feature>
<feature type="helix" evidence="37">
    <location>
        <begin position="534"/>
        <end position="543"/>
    </location>
</feature>
<feature type="helix" evidence="37">
    <location>
        <begin position="553"/>
        <end position="571"/>
    </location>
</feature>
<feature type="helix" evidence="37">
    <location>
        <begin position="581"/>
        <end position="588"/>
    </location>
</feature>
<feature type="helix" evidence="37">
    <location>
        <begin position="589"/>
        <end position="594"/>
    </location>
</feature>
<feature type="strand" evidence="38">
    <location>
        <begin position="596"/>
        <end position="600"/>
    </location>
</feature>
<feature type="helix" evidence="37">
    <location>
        <begin position="604"/>
        <end position="622"/>
    </location>
</feature>
<feature type="helix" evidence="37">
    <location>
        <begin position="630"/>
        <end position="643"/>
    </location>
</feature>
<protein>
    <recommendedName>
        <fullName evidence="29">Atypical kinase COQ8A, mitochondrial</fullName>
        <ecNumber evidence="15">2.7.-.-</ecNumber>
    </recommendedName>
    <alternativeName>
        <fullName evidence="24">Chaperone activity of bc1 complex-like</fullName>
        <shortName evidence="24">Chaperone-ABC1-like</shortName>
    </alternativeName>
    <alternativeName>
        <fullName evidence="29">Coenzyme Q protein 8A</fullName>
    </alternativeName>
    <alternativeName>
        <fullName evidence="33">aarF domain-containing protein kinase 3</fullName>
    </alternativeName>
</protein>